<accession>P04114</accession>
<accession>O00502</accession>
<accession>P78479</accession>
<accession>P78480</accession>
<accession>P78481</accession>
<accession>Q13779</accession>
<accession>Q13785</accession>
<accession>Q13786</accession>
<accession>Q13787</accession>
<accession>Q13788</accession>
<accession>Q4ZG63</accession>
<accession>Q53QC8</accession>
<accession>Q7Z600</accession>
<accession>Q9UMN0</accession>
<evidence type="ECO:0000250" key="1">
    <source>
        <dbReference type="UniProtKB" id="E9Q414"/>
    </source>
</evidence>
<evidence type="ECO:0000255" key="2"/>
<evidence type="ECO:0000255" key="3">
    <source>
        <dbReference type="PROSITE-ProRule" id="PRU00557"/>
    </source>
</evidence>
<evidence type="ECO:0000269" key="4">
    <source>
    </source>
</evidence>
<evidence type="ECO:0000269" key="5">
    <source>
    </source>
</evidence>
<evidence type="ECO:0000269" key="6">
    <source>
    </source>
</evidence>
<evidence type="ECO:0000269" key="7">
    <source>
    </source>
</evidence>
<evidence type="ECO:0000269" key="8">
    <source>
    </source>
</evidence>
<evidence type="ECO:0000269" key="9">
    <source>
    </source>
</evidence>
<evidence type="ECO:0000269" key="10">
    <source>
    </source>
</evidence>
<evidence type="ECO:0000269" key="11">
    <source>
    </source>
</evidence>
<evidence type="ECO:0000269" key="12">
    <source>
    </source>
</evidence>
<evidence type="ECO:0000269" key="13">
    <source>
    </source>
</evidence>
<evidence type="ECO:0000269" key="14">
    <source>
    </source>
</evidence>
<evidence type="ECO:0000269" key="15">
    <source>
    </source>
</evidence>
<evidence type="ECO:0000269" key="16">
    <source>
    </source>
</evidence>
<evidence type="ECO:0000269" key="17">
    <source>
    </source>
</evidence>
<evidence type="ECO:0000269" key="18">
    <source>
    </source>
</evidence>
<evidence type="ECO:0000269" key="19">
    <source>
    </source>
</evidence>
<evidence type="ECO:0000269" key="20">
    <source>
    </source>
</evidence>
<evidence type="ECO:0000269" key="21">
    <source>
    </source>
</evidence>
<evidence type="ECO:0000269" key="22">
    <source>
    </source>
</evidence>
<evidence type="ECO:0000269" key="23">
    <source>
    </source>
</evidence>
<evidence type="ECO:0000269" key="24">
    <source>
    </source>
</evidence>
<evidence type="ECO:0000269" key="25">
    <source>
    </source>
</evidence>
<evidence type="ECO:0000269" key="26">
    <source>
    </source>
</evidence>
<evidence type="ECO:0000269" key="27">
    <source>
    </source>
</evidence>
<evidence type="ECO:0000269" key="28">
    <source>
    </source>
</evidence>
<evidence type="ECO:0000269" key="29">
    <source>
    </source>
</evidence>
<evidence type="ECO:0000269" key="30">
    <source>
    </source>
</evidence>
<evidence type="ECO:0000269" key="31">
    <source>
    </source>
</evidence>
<evidence type="ECO:0000269" key="32">
    <source>
    </source>
</evidence>
<evidence type="ECO:0000269" key="33">
    <source>
    </source>
</evidence>
<evidence type="ECO:0000269" key="34">
    <source>
    </source>
</evidence>
<evidence type="ECO:0000269" key="35">
    <source>
    </source>
</evidence>
<evidence type="ECO:0000269" key="36">
    <source>
    </source>
</evidence>
<evidence type="ECO:0000269" key="37">
    <source>
    </source>
</evidence>
<evidence type="ECO:0000269" key="38">
    <source>
    </source>
</evidence>
<evidence type="ECO:0000269" key="39">
    <source>
    </source>
</evidence>
<evidence type="ECO:0000269" key="40">
    <source>
    </source>
</evidence>
<evidence type="ECO:0000269" key="41">
    <source>
    </source>
</evidence>
<evidence type="ECO:0000269" key="42">
    <source>
    </source>
</evidence>
<evidence type="ECO:0000269" key="43">
    <source>
    </source>
</evidence>
<evidence type="ECO:0000269" key="44">
    <source>
    </source>
</evidence>
<evidence type="ECO:0000269" key="45">
    <source>
    </source>
</evidence>
<evidence type="ECO:0000269" key="46">
    <source>
    </source>
</evidence>
<evidence type="ECO:0000269" key="47">
    <source ref="6"/>
</evidence>
<evidence type="ECO:0000305" key="48"/>
<evidence type="ECO:0007744" key="49">
    <source>
    </source>
</evidence>
<evidence type="ECO:0007744" key="50">
    <source>
    </source>
</evidence>
<name>APOB_HUMAN</name>
<feature type="signal peptide">
    <location>
        <begin position="1"/>
        <end position="27"/>
    </location>
</feature>
<feature type="chain" id="PRO_0000020750" description="Apolipoprotein B-100">
    <location>
        <begin position="28"/>
        <end position="4563"/>
    </location>
</feature>
<feature type="chain" id="PRO_0000020751" description="Apolipoprotein B-48">
    <location>
        <begin position="28"/>
        <end position="2179"/>
    </location>
</feature>
<feature type="domain" description="Vitellogenin" evidence="3">
    <location>
        <begin position="46"/>
        <end position="672"/>
    </location>
</feature>
<feature type="region of interest" description="Heparin-binding">
    <location>
        <begin position="32"/>
        <end position="126"/>
    </location>
</feature>
<feature type="region of interest" description="Heparin-binding">
    <location>
        <begin position="232"/>
        <end position="306"/>
    </location>
</feature>
<feature type="region of interest" description="Heparin-binding">
    <location>
        <begin position="902"/>
        <end position="959"/>
    </location>
</feature>
<feature type="region of interest" description="Heparin-binding">
    <location>
        <begin position="2043"/>
        <end position="2178"/>
    </location>
</feature>
<feature type="region of interest" description="Heparin-binding">
    <location>
        <begin position="3161"/>
        <end position="3236"/>
    </location>
</feature>
<feature type="region of interest" description="Basic (possible receptor binding region)">
    <location>
        <begin position="3174"/>
        <end position="3184"/>
    </location>
</feature>
<feature type="region of interest" description="LDL receptor binding">
    <location>
        <begin position="3373"/>
        <end position="3393"/>
    </location>
</feature>
<feature type="region of interest" description="Heparin-binding">
    <location>
        <begin position="3383"/>
        <end position="3516"/>
    </location>
</feature>
<feature type="region of interest" description="Basic (possible receptor binding region)">
    <location>
        <begin position="3386"/>
        <end position="3394"/>
    </location>
</feature>
<feature type="modified residue" description="N6-acetyllysine" evidence="49">
    <location>
        <position position="2004"/>
    </location>
</feature>
<feature type="modified residue" description="Phosphoserine" evidence="50">
    <location>
        <position position="3279"/>
    </location>
</feature>
<feature type="modified residue" description="Phosphoserine; by FAM20C" evidence="25 50">
    <location>
        <position position="4048"/>
    </location>
</feature>
<feature type="modified residue" description="Phosphothreonine" evidence="50">
    <location>
        <position position="4052"/>
    </location>
</feature>
<feature type="lipid moiety-binding region" description="S-palmitoyl cysteine" evidence="4">
    <location>
        <position position="1112"/>
    </location>
</feature>
<feature type="glycosylation site" description="N-linked (GlcNAc...) asparagine" evidence="2">
    <location>
        <position position="34"/>
    </location>
</feature>
<feature type="glycosylation site" description="N-linked (GlcNAc...) asparagine" evidence="12">
    <location>
        <position position="185"/>
    </location>
</feature>
<feature type="glycosylation site" description="N-linked (GlcNAc...) asparagine" evidence="2">
    <location>
        <position position="983"/>
    </location>
</feature>
<feature type="glycosylation site" description="N-linked (GlcNAc...) asparagine" evidence="2">
    <location>
        <position position="1368"/>
    </location>
</feature>
<feature type="glycosylation site" description="N-linked (GlcNAc...) asparagine" evidence="2">
    <location>
        <position position="1377"/>
    </location>
</feature>
<feature type="glycosylation site" description="N-linked (GlcNAc...) asparagine" evidence="9 12">
    <location>
        <position position="1523"/>
    </location>
</feature>
<feature type="glycosylation site" description="N-linked (GlcNAc...) asparagine" evidence="12">
    <location>
        <position position="2239"/>
    </location>
</feature>
<feature type="glycosylation site" description="N-linked (GlcNAc...) asparagine" evidence="2">
    <location>
        <position position="2560"/>
    </location>
</feature>
<feature type="glycosylation site" description="N-linked (GlcNAc...) asparagine" evidence="12">
    <location>
        <position position="2779"/>
    </location>
</feature>
<feature type="glycosylation site" description="N-linked (GlcNAc...) asparagine" evidence="9 12">
    <location>
        <position position="2982"/>
    </location>
</feature>
<feature type="glycosylation site" description="N-linked (GlcNAc...) asparagine" evidence="12">
    <location>
        <position position="3101"/>
    </location>
</feature>
<feature type="glycosylation site" description="N-linked (GlcNAc...) asparagine" evidence="12">
    <location>
        <position position="3224"/>
    </location>
</feature>
<feature type="glycosylation site" description="N-linked (GlcNAc...) asparagine" evidence="2">
    <location>
        <position position="3336"/>
    </location>
</feature>
<feature type="glycosylation site" description="N-linked (GlcNAc...) asparagine" evidence="7">
    <location>
        <position position="3358"/>
    </location>
</feature>
<feature type="glycosylation site" description="N-linked (GlcNAc...) asparagine" evidence="12">
    <location>
        <position position="3411"/>
    </location>
</feature>
<feature type="glycosylation site" description="N-linked (GlcNAc...) asparagine" evidence="9 12">
    <location>
        <position position="3465"/>
    </location>
</feature>
<feature type="glycosylation site" description="N-linked (GlcNAc...) asparagine" evidence="9 12">
    <location>
        <position position="3895"/>
    </location>
</feature>
<feature type="glycosylation site" description="N-linked (GlcNAc...) asparagine" evidence="2">
    <location>
        <position position="4237"/>
    </location>
</feature>
<feature type="glycosylation site" description="N-linked (GlcNAc...) asparagine" evidence="2">
    <location>
        <position position="4431"/>
    </location>
</feature>
<feature type="disulfide bond" evidence="3 15">
    <location>
        <begin position="39"/>
        <end position="88"/>
    </location>
</feature>
<feature type="disulfide bond" evidence="3 15">
    <location>
        <begin position="78"/>
        <end position="97"/>
    </location>
</feature>
<feature type="disulfide bond" evidence="3 15">
    <location>
        <begin position="186"/>
        <end position="212"/>
    </location>
</feature>
<feature type="disulfide bond" evidence="3 15">
    <location>
        <begin position="245"/>
        <end position="261"/>
    </location>
</feature>
<feature type="disulfide bond" evidence="3 15">
    <location>
        <begin position="385"/>
        <end position="390"/>
    </location>
</feature>
<feature type="disulfide bond" evidence="3 15">
    <location>
        <begin position="478"/>
        <end position="513"/>
    </location>
</feature>
<feature type="disulfide bond" evidence="3 15">
    <location>
        <begin position="966"/>
        <end position="976"/>
    </location>
</feature>
<feature type="disulfide bond" evidence="3 15">
    <location>
        <begin position="3194"/>
        <end position="3324"/>
    </location>
</feature>
<feature type="sequence variant" id="VAR_067277" evidence="19">
    <location>
        <begin position="12"/>
        <end position="14"/>
    </location>
</feature>
<feature type="sequence variant" id="VAR_016184" description="Influences plasma concentrations of low density lipoprotein cholesterol; dbSNP:rs1367117." evidence="5 14 15 19 34 40">
    <original>T</original>
    <variation>I</variation>
    <location>
        <position position="98"/>
    </location>
</feature>
<feature type="sequence variant" id="VAR_022036" description="In dbSNP:rs9282603.">
    <original>Y</original>
    <variation>H</variation>
    <location>
        <position position="103"/>
    </location>
</feature>
<feature type="sequence variant" id="VAR_022037" description="In dbSNP:rs6752026.">
    <original>P</original>
    <variation>S</variation>
    <location>
        <position position="145"/>
    </location>
</feature>
<feature type="sequence variant" id="VAR_056737" description="In dbSNP:rs13306198.">
    <original>T</original>
    <variation>M</variation>
    <location>
        <position position="194"/>
    </location>
</feature>
<feature type="sequence variant" id="VAR_076538" description="Does not affect plasma lipid levels; dbSNP:rs61741625." evidence="27">
    <original>A</original>
    <variation>T</variation>
    <location>
        <position position="251"/>
    </location>
</feature>
<feature type="sequence variant" id="VAR_019827" evidence="41">
    <original>K</original>
    <variation>N</variation>
    <location>
        <position position="273"/>
    </location>
</feature>
<feature type="sequence variant" id="VAR_029341" description="In dbSNP:rs12714225.">
    <original>I</original>
    <variation>T</variation>
    <location>
        <position position="408"/>
    </location>
</feature>
<feature type="sequence variant" id="VAR_022610" description="In FHBL1; reduced protein secretion; dbSNP:rs771541567." evidence="5">
    <original>R</original>
    <variation>W</variation>
    <location>
        <position position="490"/>
    </location>
</feature>
<feature type="sequence variant" id="VAR_020135" description="In dbSNP:rs12714214.">
    <original>P</original>
    <variation>L</variation>
    <location>
        <position position="554"/>
    </location>
</feature>
<feature type="sequence variant" id="VAR_019828" description="In dbSNP:rs679899." evidence="19 32 40">
    <original>A</original>
    <variation>V</variation>
    <location>
        <position position="618"/>
    </location>
</feature>
<feature type="sequence variant" id="VAR_020136" description="In dbSNP:rs12691202." evidence="19">
    <original>V</original>
    <variation>I</variation>
    <location>
        <position position="730"/>
    </location>
</feature>
<feature type="sequence variant" id="VAR_016185" description="In dbSNP:rs1800476.">
    <original>V</original>
    <variation>I</variation>
    <location>
        <position position="733"/>
    </location>
</feature>
<feature type="sequence variant" id="VAR_020137" description="In dbSNP:rs12714192.">
    <original>T</original>
    <variation>N</variation>
    <location>
        <position position="741"/>
    </location>
</feature>
<feature type="sequence variant" id="VAR_029342" description="In dbSNP:rs12714097.">
    <original>P</original>
    <variation>L</variation>
    <location>
        <position position="877"/>
    </location>
</feature>
<feature type="sequence variant" id="VAR_076539" description="In FHBL1; uncertain significance; does not affect interaction with MTTP." evidence="27">
    <original>V</original>
    <variation>L</variation>
    <location>
        <position position="952"/>
    </location>
</feature>
<feature type="sequence variant" id="VAR_056738" description="In dbSNP:rs13306206.">
    <original>P</original>
    <variation>S</variation>
    <location>
        <position position="955"/>
    </location>
</feature>
<feature type="sequence variant" id="VAR_029343" description="In dbSNP:rs12720801.">
    <original>G</original>
    <variation>S</variation>
    <location>
        <position position="1086"/>
    </location>
</feature>
<feature type="sequence variant" id="VAR_029344" description="In dbSNP:rs12713844.">
    <original>D</original>
    <variation>H</variation>
    <location>
        <position position="1113"/>
    </location>
</feature>
<feature type="sequence variant" id="VAR_022611" description="In dbSNP:rs12713843." evidence="6">
    <original>R</original>
    <variation>H</variation>
    <location>
        <position position="1128"/>
    </location>
</feature>
<feature type="sequence variant" id="VAR_019829" description="In dbSNP:rs1041956." evidence="18 41">
    <original>Q</original>
    <variation>E</variation>
    <location>
        <position position="1218"/>
    </location>
</feature>
<feature type="sequence variant" id="VAR_029345" description="In dbSNP:rs13306187.">
    <original>R</original>
    <variation>H</variation>
    <location>
        <position position="1388"/>
    </location>
</feature>
<feature type="sequence variant" id="VAR_061558" description="In dbSNP:rs568413." evidence="8">
    <original>C</original>
    <variation>Y</variation>
    <location>
        <position position="1422"/>
    </location>
</feature>
<feature type="sequence variant" id="VAR_005016" description="In dbSNP:rs1801697." evidence="44">
    <original>F</original>
    <variation>L</variation>
    <location>
        <position position="1437"/>
    </location>
</feature>
<feature type="sequence variant" id="VAR_067278" description="In dbSNP:rs61742247." evidence="19">
    <original>S</original>
    <variation>T</variation>
    <location>
        <position position="1613"/>
    </location>
</feature>
<feature type="sequence variant" id="VAR_068911" description="In dbSNP:rs773681906." evidence="18 34">
    <original>E</original>
    <variation>D</variation>
    <location>
        <position position="1670"/>
    </location>
</feature>
<feature type="sequence variant" id="VAR_005017" description="In dbSNP:rs1801699." evidence="44 46">
    <original>N</original>
    <variation>S</variation>
    <location>
        <position position="1914"/>
    </location>
</feature>
<feature type="sequence variant" id="VAR_005018" description="In dbSNP:rs533617." evidence="19 46">
    <original>H</original>
    <variation>R</variation>
    <location>
        <position position="1923"/>
    </location>
</feature>
<feature type="sequence variant" id="VAR_068912" evidence="18 35">
    <original>I</original>
    <variation>N</variation>
    <location>
        <position position="2037"/>
    </location>
</feature>
<feature type="sequence variant" id="VAR_019830" description="In dbSNP:rs1041960." evidence="41">
    <original>L</original>
    <variation>V</variation>
    <location>
        <position position="2092"/>
    </location>
</feature>
<feature type="sequence variant" id="VAR_029346" description="In dbSNP:rs12713681.">
    <original>D</original>
    <variation>H</variation>
    <location>
        <position position="2299"/>
    </location>
</feature>
<feature type="sequence variant" id="VAR_059582" description="In dbSNP:rs584542." evidence="29 32 35 37 39 40 41 47">
    <original>I</original>
    <variation>V</variation>
    <location>
        <position position="2313"/>
    </location>
</feature>
<feature type="sequence variant" id="VAR_019831" description="In dbSNP:rs1041971." evidence="41">
    <original>A</original>
    <variation>T</variation>
    <location>
        <position position="2365"/>
    </location>
</feature>
<feature type="sequence variant" id="VAR_020138" description="In dbSNP:rs12713675.">
    <original>A</original>
    <variation>D</variation>
    <location>
        <position position="2456"/>
    </location>
</feature>
<feature type="sequence variant" id="VAR_035795" description="In a colorectal cancer sample; somatic mutation; confirmed at protein level." evidence="11 18">
    <original>F</original>
    <variation>C</variation>
    <location>
        <position position="2564"/>
    </location>
</feature>
<feature type="sequence variant" id="VAR_005019" description="In dbSNP:rs1801696." evidence="18 19 44">
    <original>E</original>
    <variation>K</variation>
    <location>
        <position position="2566"/>
    </location>
</feature>
<feature type="sequence variant" id="VAR_019832" description="In dbSNP:rs1042013." evidence="41">
    <original>L</original>
    <variation>Q</variation>
    <location>
        <position position="2680"/>
    </location>
</feature>
<feature type="sequence variant" id="VAR_005020" description="In dbSNP:rs676210." evidence="19 20 46">
    <original>P</original>
    <variation>L</variation>
    <location>
        <position position="2739"/>
    </location>
</feature>
<feature type="sequence variant" id="VAR_022038" description="In dbSNP:rs2163204.">
    <original>N</original>
    <variation>H</variation>
    <location>
        <position position="2785"/>
    </location>
</feature>
<feature type="sequence variant" id="VAR_005021" description="In dbSNP:rs1801694." evidence="44">
    <original>A</original>
    <variation>T</variation>
    <location>
        <position position="3121"/>
    </location>
</feature>
<feature type="sequence variant" id="VAR_029347" description="In dbSNP:rs12720848.">
    <original>H</original>
    <variation>N</variation>
    <location>
        <position position="3182"/>
    </location>
</feature>
<feature type="sequence variant" id="VAR_029348" description="In dbSNP:rs12720854.">
    <original>S</original>
    <variation>G</variation>
    <location>
        <position position="3279"/>
    </location>
</feature>
<feature type="sequence variant" id="VAR_020139" description="In dbSNP:rs12720855.">
    <original>S</original>
    <variation>P</variation>
    <location>
        <position position="3294"/>
    </location>
</feature>
<feature type="sequence variant" id="VAR_005022" description="In dbSNP:rs1042021." evidence="29 31 32 35 37 40 41 46">
    <original>D</original>
    <variation>H</variation>
    <location>
        <position position="3319"/>
    </location>
</feature>
<feature type="sequence variant" id="VAR_005023" description="In dbSNP:rs1042022." evidence="29 31 32 35 37 40 41 46">
    <original>T</original>
    <variation>K</variation>
    <location>
        <position position="3427"/>
    </location>
</feature>
<feature type="sequence variant" id="VAR_005024" description="In dbSNP:rs1042023." evidence="29 31 32 35 37 40 41 46">
    <original>Q</original>
    <variation>E</variation>
    <location>
        <position position="3432"/>
    </location>
</feature>
<feature type="sequence variant" id="VAR_005025" description="In FHCL2; dbSNP:rs5742904." evidence="16 24 45">
    <original>R</original>
    <variation>Q</variation>
    <location>
        <position position="3527"/>
    </location>
</feature>
<feature type="sequence variant" id="VAR_005026" description="In FHCL2; dbSNP:rs12713559." evidence="43 45">
    <original>R</original>
    <variation>C</variation>
    <location>
        <position position="3558"/>
    </location>
</feature>
<feature type="sequence variant" id="VAR_016186" description="In dbSNP:rs1801701." evidence="19">
    <original>R</original>
    <variation>Q</variation>
    <location>
        <position position="3638"/>
    </location>
</feature>
<feature type="sequence variant" id="VAR_019833" description="In dbSNP:rs1042025." evidence="29 31 32 41">
    <original>I</original>
    <variation>T</variation>
    <location>
        <position position="3732"/>
    </location>
</feature>
<feature type="sequence variant" id="VAR_029349" description="In dbSNP:rs12713540.">
    <original>S</original>
    <variation>T</variation>
    <location>
        <position position="3801"/>
    </location>
</feature>
<feature type="sequence variant" id="VAR_067279" description="In dbSNP:rs776119459." evidence="19">
    <original>I</original>
    <variation>L</variation>
    <location>
        <position position="3835"/>
    </location>
</feature>
<feature type="sequence variant" id="VAR_005027" description="In dbSNP:rs72654409." evidence="46">
    <original>V</original>
    <variation>I</variation>
    <location>
        <position position="3921"/>
    </location>
</feature>
<feature type="sequence variant" id="VAR_005028" description="In dbSNP:rs1801698." evidence="44">
    <original>T</original>
    <variation>A</variation>
    <location>
        <position position="3945"/>
    </location>
</feature>
<feature type="sequence variant" id="VAR_019834" description="In dbSNP:rs1042027." evidence="31 32 35 41 42">
    <original>F</original>
    <variation>L</variation>
    <location>
        <position position="3949"/>
    </location>
</feature>
<feature type="sequence variant" id="VAR_019835" description="In dbSNP:rs1126468." evidence="31 32 41 42">
    <original>Y</original>
    <variation>F</variation>
    <location>
        <position position="3964"/>
    </location>
</feature>
<feature type="sequence variant" id="VAR_005029" description="In dbSNP:rs1801703." evidence="44">
    <original>V</original>
    <variation>M</variation>
    <location>
        <position position="4128"/>
    </location>
</feature>
<feature type="sequence variant" id="VAR_016187" description="In dbSNP:rs1042031." evidence="19 31 32 35 41 42">
    <original>E</original>
    <variation>K</variation>
    <location>
        <position position="4181"/>
    </location>
</feature>
<feature type="sequence variant" id="VAR_016188" description="In dbSNP:rs1801702." evidence="19">
    <original>R</original>
    <variation>T</variation>
    <location>
        <position position="4270"/>
    </location>
</feature>
<feature type="sequence variant" id="VAR_067280" description="In dbSNP:rs72654423." evidence="19">
    <original>I</original>
    <variation>V</variation>
    <location>
        <position position="4314"/>
    </location>
</feature>
<feature type="sequence variant" id="VAR_005030" description="In dbSNP:rs1042034." evidence="13 19 29 30 31 32 35 37 40 41 47">
    <original>S</original>
    <variation>N</variation>
    <location>
        <position position="4338"/>
    </location>
</feature>
<feature type="sequence variant" id="VAR_029350" description="In dbSNP:rs12720843.">
    <original>V</original>
    <variation>A</variation>
    <location>
        <position position="4394"/>
    </location>
</feature>
<feature type="sequence variant" id="VAR_005031" description="In dbSNP:rs1801695." evidence="19 44">
    <original>A</original>
    <variation>T</variation>
    <location>
        <position position="4481"/>
    </location>
</feature>
<feature type="sequence variant" id="VAR_067281" description="In dbSNP:rs142702699." evidence="19">
    <original>I</original>
    <variation>V</variation>
    <location>
        <position position="4482"/>
    </location>
</feature>
<feature type="sequence variant" id="VAR_020140" description="In dbSNP:rs12713450.">
    <original>T</original>
    <variation>M</variation>
    <location>
        <position position="4484"/>
    </location>
</feature>
<feature type="mutagenesis site" description="Impairs protein secretion." evidence="5">
    <original>D</original>
    <variation>N</variation>
    <location>
        <position position="483"/>
    </location>
</feature>
<feature type="mutagenesis site" description="Does not affect protein secretion." evidence="5">
    <original>D</original>
    <variation>Q</variation>
    <location>
        <position position="483"/>
    </location>
</feature>
<feature type="mutagenesis site" description="Impairs protein secretion." evidence="5">
    <original>R</original>
    <variation>A</variation>
    <location>
        <position position="490"/>
    </location>
</feature>
<feature type="mutagenesis site" description="Does not affect protein secretion." evidence="5">
    <original>R</original>
    <variation>K</variation>
    <location>
        <position position="490"/>
    </location>
</feature>
<feature type="sequence conflict" description="In Ref. 5; AAB60718/CAA28420." evidence="48" ref="5">
    <location>
        <begin position="11"/>
        <end position="13"/>
    </location>
</feature>
<feature type="sequence conflict" description="In Ref. 3; AAA35549." evidence="48" ref="3">
    <original>L</original>
    <variation>V</variation>
    <location>
        <position position="329"/>
    </location>
</feature>
<feature type="sequence conflict" description="In Ref. 3; AAA35549." evidence="48" ref="3">
    <original>L</original>
    <variation>I</variation>
    <location>
        <position position="645"/>
    </location>
</feature>
<feature type="sequence conflict" description="In Ref. 4; AAB04636." evidence="48" ref="4">
    <original>L</original>
    <variation>P</variation>
    <location>
        <position position="704"/>
    </location>
</feature>
<feature type="sequence conflict" description="In Ref. 12; AAA51759." evidence="48" ref="12">
    <original>LQLLGKLLLMGARTLQGI</original>
    <variation>SSSWKAASHGCPHSAGD</variation>
    <location>
        <begin position="792"/>
        <end position="809"/>
    </location>
</feature>
<feature type="sequence conflict" description="In Ref. 4; AAB04636." evidence="48" ref="4">
    <original>Q</original>
    <variation>R</variation>
    <location>
        <position position="793"/>
    </location>
</feature>
<feature type="sequence conflict" description="In Ref. 13; AA sequence." evidence="48" ref="13">
    <original>D</original>
    <variation>K</variation>
    <location>
        <position position="893"/>
    </location>
</feature>
<feature type="sequence conflict" description="In Ref. 3; AAA35549." evidence="48" ref="3">
    <original>A</original>
    <variation>P</variation>
    <location>
        <position position="919"/>
    </location>
</feature>
<feature type="sequence conflict" description="In Ref. 5; CAA28420." evidence="48" ref="5">
    <original>H</original>
    <variation>D</variation>
    <location>
        <position position="1109"/>
    </location>
</feature>
<feature type="sequence conflict" description="In Ref. 8; AAA51752." evidence="48" ref="8">
    <original>T</original>
    <variation>R</variation>
    <location>
        <position position="1180"/>
    </location>
</feature>
<feature type="sequence conflict" description="In Ref. 4; AAB04636." evidence="48" ref="4">
    <original>F</original>
    <variation>S</variation>
    <location>
        <position position="1271"/>
    </location>
</feature>
<feature type="sequence conflict" description="In Ref. 5; CAA28420." evidence="48" ref="5">
    <original>F</original>
    <variation>S</variation>
    <location>
        <position position="1418"/>
    </location>
</feature>
<feature type="sequence conflict" description="In Ref. 8; AAA51752." evidence="48" ref="8">
    <original>N</original>
    <variation>I</variation>
    <location>
        <position position="1445"/>
    </location>
</feature>
<feature type="sequence conflict" description="In Ref. 8; AAA51752." evidence="48" ref="8">
    <original>G</original>
    <variation>E</variation>
    <location>
        <position position="1535"/>
    </location>
</feature>
<feature type="sequence conflict" description="In Ref. 4; AAB04636." evidence="48" ref="4">
    <original>R</original>
    <variation>G</variation>
    <location>
        <position position="1867"/>
    </location>
</feature>
<feature type="sequence conflict" description="In Ref. 5; CAA28420." evidence="48" ref="5">
    <original>N</original>
    <variation>K</variation>
    <location>
        <position position="2098"/>
    </location>
</feature>
<feature type="sequence conflict" description="In Ref. 4; AAB04636." evidence="48" ref="4">
    <original>I</original>
    <variation>T</variation>
    <location>
        <position position="2218"/>
    </location>
</feature>
<feature type="sequence conflict" description="In Ref. 5; CAA28420." evidence="48" ref="5">
    <original>N</original>
    <variation>I</variation>
    <location>
        <position position="2221"/>
    </location>
</feature>
<feature type="sequence conflict" description="In Ref. 16; AAA51741." evidence="48" ref="16">
    <original>LIG</original>
    <variation>PYW</variation>
    <location>
        <begin position="2324"/>
        <end position="2326"/>
    </location>
</feature>
<feature type="sequence conflict" description="In Ref. 16; AAA51741." evidence="48" ref="16">
    <original>Q</original>
    <variation>H</variation>
    <location>
        <position position="2353"/>
    </location>
</feature>
<feature type="sequence conflict" description="In Ref. 5; CAA28420." evidence="48" ref="5">
    <original>G</original>
    <variation>S</variation>
    <location>
        <position position="2540"/>
    </location>
</feature>
<feature type="sequence conflict" description="In Ref. 15; AAA51758." evidence="48" ref="15">
    <location>
        <begin position="2718"/>
        <end position="2737"/>
    </location>
</feature>
<feature type="sequence conflict" description="In Ref. 4; AAB04636." evidence="48" ref="4">
    <original>C</original>
    <variation>S</variation>
    <location>
        <position position="2933"/>
    </location>
</feature>
<feature type="sequence conflict" description="In Ref. 13; AA sequence." evidence="48" ref="13">
    <original>H</original>
    <variation>L</variation>
    <location>
        <position position="3114"/>
    </location>
</feature>
<feature type="sequence conflict" description="In Ref. 13; AA sequence." evidence="48" ref="13">
    <original>T</original>
    <variation>R</variation>
    <location>
        <position position="3131"/>
    </location>
</feature>
<feature type="sequence conflict" description="In Ref. 13; AA sequence." evidence="48" ref="13">
    <original>E</original>
    <variation>P</variation>
    <location>
        <position position="3134"/>
    </location>
</feature>
<feature type="sequence conflict" description="In Ref. 13; AA sequence." evidence="48" ref="13">
    <original>L</original>
    <variation>R</variation>
    <location>
        <position position="3137"/>
    </location>
</feature>
<feature type="sequence conflict" description="In Ref. 5; CAA28420." evidence="48" ref="5">
    <original>H</original>
    <variation>Q</variation>
    <location>
        <position position="3239"/>
    </location>
</feature>
<feature type="sequence conflict" description="In Ref. 4; AAB04636." evidence="48" ref="4">
    <original>L</original>
    <variation>I</variation>
    <location>
        <position position="3286"/>
    </location>
</feature>
<feature type="sequence conflict" description="In Ref. 15; AAA51758." evidence="48" ref="15">
    <original>R</original>
    <variation>L</variation>
    <location>
        <position position="3291"/>
    </location>
</feature>
<feature type="sequence conflict" description="In Ref. 15; AAA51758." evidence="48" ref="15">
    <original>I</original>
    <variation>N</variation>
    <location>
        <position position="3337"/>
    </location>
</feature>
<feature type="sequence conflict" description="In Ref. 4; AAB04636." evidence="48" ref="4">
    <original>A</original>
    <variation>P</variation>
    <location>
        <position position="3431"/>
    </location>
</feature>
<feature type="sequence conflict" description="In Ref. 24; AAA51742." evidence="48" ref="24">
    <original>D</original>
    <variation>N</variation>
    <location>
        <position position="3728"/>
    </location>
</feature>
<feature type="sequence conflict" description="In Ref. 4; AAB04636." evidence="48" ref="4">
    <original>N</original>
    <variation>T</variation>
    <location>
        <position position="3782"/>
    </location>
</feature>
<feature type="sequence conflict" description="In Ref. 5; CAA28420 and 23; AAA51750." evidence="48" ref="5 23">
    <original>Q</original>
    <variation>R</variation>
    <location>
        <position position="3824"/>
    </location>
</feature>
<feature type="sequence conflict" description="In Ref. 3; AAA35549 and 24; AAA51742." evidence="48" ref="3 24">
    <original>V</original>
    <variation>A</variation>
    <location>
        <position position="3876"/>
    </location>
</feature>
<feature type="sequence conflict" description="In Ref. 10; AA sequence." evidence="48" ref="10">
    <original>T</original>
    <variation>Y</variation>
    <location>
        <position position="3911"/>
    </location>
</feature>
<feature type="sequence conflict" description="In Ref. 24; AAA51742." evidence="48" ref="24">
    <original>F</original>
    <variation>S</variation>
    <location>
        <position position="3983"/>
    </location>
</feature>
<feature type="sequence conflict" description="In Ref. 24; AAA51742." evidence="48" ref="24">
    <original>A</original>
    <variation>P</variation>
    <location>
        <position position="4002"/>
    </location>
</feature>
<feature type="sequence conflict" description="In Ref. 3; AAA35549 and 24; AAA51742." evidence="48" ref="3 24">
    <original>NN</original>
    <variation>DH</variation>
    <location>
        <begin position="4110"/>
        <end position="4111"/>
    </location>
</feature>
<feature type="sequence conflict" description="In Ref. 3; AAA35549 and 24; AAA51742." evidence="48" ref="3 24">
    <original>Q</original>
    <variation>E</variation>
    <location>
        <position position="4122"/>
    </location>
</feature>
<feature type="sequence conflict" description="In Ref. 3; AAA35549 and 24; AAA51742." evidence="48" ref="3 24">
    <original>V</original>
    <variation>E</variation>
    <location>
        <position position="4128"/>
    </location>
</feature>
<feature type="sequence conflict" description="In Ref. 3; AAA35549 and 24; AAA51742." evidence="48" ref="3 24">
    <original>A</original>
    <variation>G</variation>
    <location>
        <position position="4133"/>
    </location>
</feature>
<feature type="sequence conflict" description="In Ref. 4; AAB04636." evidence="48" ref="4">
    <original>H</original>
    <variation>K</variation>
    <location>
        <position position="4188"/>
    </location>
</feature>
<feature type="sequence conflict" description="In Ref. 26; AAA35548." evidence="48" ref="26">
    <original>CT</original>
    <variation>FP</variation>
    <location>
        <begin position="4217"/>
        <end position="4218"/>
    </location>
</feature>
<feature type="sequence conflict" description="In Ref. 4; AAB04636." evidence="48" ref="4">
    <original>I</original>
    <variation>M</variation>
    <location>
        <position position="4221"/>
    </location>
</feature>
<keyword id="KW-0002">3D-structure</keyword>
<keyword id="KW-0007">Acetylation</keyword>
<keyword id="KW-0065">Atherosclerosis</keyword>
<keyword id="KW-0153">Cholesterol metabolism</keyword>
<keyword id="KW-0162">Chylomicron</keyword>
<keyword id="KW-0963">Cytoplasm</keyword>
<keyword id="KW-0903">Direct protein sequencing</keyword>
<keyword id="KW-0225">Disease variant</keyword>
<keyword id="KW-1015">Disulfide bond</keyword>
<keyword id="KW-0325">Glycoprotein</keyword>
<keyword id="KW-0358">Heparin-binding</keyword>
<keyword id="KW-0427">LDL</keyword>
<keyword id="KW-0551">Lipid droplet</keyword>
<keyword id="KW-0443">Lipid metabolism</keyword>
<keyword id="KW-0445">Lipid transport</keyword>
<keyword id="KW-0449">Lipoprotein</keyword>
<keyword id="KW-0564">Palmitate</keyword>
<keyword id="KW-0597">Phosphoprotein</keyword>
<keyword id="KW-1267">Proteomics identification</keyword>
<keyword id="KW-1185">Reference proteome</keyword>
<keyword id="KW-0691">RNA editing</keyword>
<keyword id="KW-0964">Secreted</keyword>
<keyword id="KW-0732">Signal</keyword>
<keyword id="KW-0753">Steroid metabolism</keyword>
<keyword id="KW-1207">Sterol metabolism</keyword>
<keyword id="KW-0813">Transport</keyword>
<keyword id="KW-0850">VLDL</keyword>
<dbReference type="EMBL" id="X04506">
    <property type="protein sequence ID" value="CAA28191.1"/>
    <property type="molecule type" value="mRNA"/>
</dbReference>
<dbReference type="EMBL" id="M19828">
    <property type="protein sequence ID" value="AAB00481.1"/>
    <property type="molecule type" value="Genomic_DNA"/>
</dbReference>
<dbReference type="EMBL" id="M19808">
    <property type="protein sequence ID" value="AAB00481.1"/>
    <property type="status" value="JOINED"/>
    <property type="molecule type" value="Genomic_DNA"/>
</dbReference>
<dbReference type="EMBL" id="M19809">
    <property type="protein sequence ID" value="AAB00481.1"/>
    <property type="status" value="JOINED"/>
    <property type="molecule type" value="Genomic_DNA"/>
</dbReference>
<dbReference type="EMBL" id="M19810">
    <property type="protein sequence ID" value="AAB00481.1"/>
    <property type="status" value="JOINED"/>
    <property type="molecule type" value="Genomic_DNA"/>
</dbReference>
<dbReference type="EMBL" id="M19811">
    <property type="protein sequence ID" value="AAB00481.1"/>
    <property type="status" value="JOINED"/>
    <property type="molecule type" value="Genomic_DNA"/>
</dbReference>
<dbReference type="EMBL" id="M19812">
    <property type="protein sequence ID" value="AAB00481.1"/>
    <property type="status" value="JOINED"/>
    <property type="molecule type" value="Genomic_DNA"/>
</dbReference>
<dbReference type="EMBL" id="M19813">
    <property type="protein sequence ID" value="AAB00481.1"/>
    <property type="status" value="JOINED"/>
    <property type="molecule type" value="Genomic_DNA"/>
</dbReference>
<dbReference type="EMBL" id="M19815">
    <property type="protein sequence ID" value="AAB00481.1"/>
    <property type="status" value="JOINED"/>
    <property type="molecule type" value="Genomic_DNA"/>
</dbReference>
<dbReference type="EMBL" id="M19816">
    <property type="protein sequence ID" value="AAB00481.1"/>
    <property type="status" value="JOINED"/>
    <property type="molecule type" value="Genomic_DNA"/>
</dbReference>
<dbReference type="EMBL" id="M19818">
    <property type="protein sequence ID" value="AAB00481.1"/>
    <property type="status" value="JOINED"/>
    <property type="molecule type" value="Genomic_DNA"/>
</dbReference>
<dbReference type="EMBL" id="M19820">
    <property type="protein sequence ID" value="AAB00481.1"/>
    <property type="status" value="JOINED"/>
    <property type="molecule type" value="Genomic_DNA"/>
</dbReference>
<dbReference type="EMBL" id="M19821">
    <property type="protein sequence ID" value="AAB00481.1"/>
    <property type="status" value="JOINED"/>
    <property type="molecule type" value="Genomic_DNA"/>
</dbReference>
<dbReference type="EMBL" id="M19823">
    <property type="protein sequence ID" value="AAB00481.1"/>
    <property type="status" value="JOINED"/>
    <property type="molecule type" value="Genomic_DNA"/>
</dbReference>
<dbReference type="EMBL" id="M19824">
    <property type="protein sequence ID" value="AAB00481.1"/>
    <property type="status" value="JOINED"/>
    <property type="molecule type" value="Genomic_DNA"/>
</dbReference>
<dbReference type="EMBL" id="M19825">
    <property type="protein sequence ID" value="AAB00481.1"/>
    <property type="status" value="JOINED"/>
    <property type="molecule type" value="Genomic_DNA"/>
</dbReference>
<dbReference type="EMBL" id="M19827">
    <property type="protein sequence ID" value="AAB00481.1"/>
    <property type="status" value="JOINED"/>
    <property type="molecule type" value="Genomic_DNA"/>
</dbReference>
<dbReference type="EMBL" id="J02610">
    <property type="protein sequence ID" value="AAA35549.1"/>
    <property type="molecule type" value="mRNA"/>
</dbReference>
<dbReference type="EMBL" id="M14162">
    <property type="protein sequence ID" value="AAB04636.1"/>
    <property type="molecule type" value="mRNA"/>
</dbReference>
<dbReference type="EMBL" id="M15053">
    <property type="protein sequence ID" value="AAB60718.1"/>
    <property type="molecule type" value="Genomic_DNA"/>
</dbReference>
<dbReference type="EMBL" id="X04714">
    <property type="protein sequence ID" value="CAA28420.1"/>
    <property type="molecule type" value="mRNA"/>
</dbReference>
<dbReference type="EMBL" id="AY324608">
    <property type="protein sequence ID" value="AAP72970.1"/>
    <property type="molecule type" value="Genomic_DNA"/>
</dbReference>
<dbReference type="EMBL" id="AC010872">
    <property type="protein sequence ID" value="AAX88848.1"/>
    <property type="molecule type" value="Genomic_DNA"/>
</dbReference>
<dbReference type="EMBL" id="AC115619">
    <property type="protein sequence ID" value="AAX93246.1"/>
    <property type="molecule type" value="Genomic_DNA"/>
</dbReference>
<dbReference type="EMBL" id="M14081">
    <property type="protein sequence ID" value="AAA51752.1"/>
    <property type="status" value="ALT_FRAME"/>
    <property type="molecule type" value="mRNA"/>
</dbReference>
<dbReference type="EMBL" id="M12681">
    <property type="protein sequence ID" value="AAA51753.1"/>
    <property type="molecule type" value="mRNA"/>
</dbReference>
<dbReference type="EMBL" id="M12480">
    <property type="protein sequence ID" value="AAA51751.1"/>
    <property type="molecule type" value="mRNA"/>
</dbReference>
<dbReference type="EMBL" id="K03175">
    <property type="protein sequence ID" value="AAA51759.1"/>
    <property type="molecule type" value="mRNA"/>
</dbReference>
<dbReference type="EMBL" id="M15421">
    <property type="protein sequence ID" value="AAA51758.1"/>
    <property type="molecule type" value="mRNA"/>
</dbReference>
<dbReference type="EMBL" id="M17367">
    <property type="protein sequence ID" value="AAA51741.1"/>
    <property type="molecule type" value="mRNA"/>
</dbReference>
<dbReference type="EMBL" id="M31030">
    <property type="protein sequence ID" value="AAA51756.1"/>
    <property type="molecule type" value="mRNA"/>
</dbReference>
<dbReference type="EMBL" id="X03325">
    <property type="protein sequence ID" value="CAA27044.1"/>
    <property type="molecule type" value="mRNA"/>
</dbReference>
<dbReference type="EMBL" id="X03326">
    <property type="protein sequence ID" value="CAA27045.1"/>
    <property type="molecule type" value="mRNA"/>
</dbReference>
<dbReference type="EMBL" id="M17779">
    <property type="protein sequence ID" value="AAA51755.1"/>
    <property type="molecule type" value="mRNA"/>
</dbReference>
<dbReference type="EMBL" id="M19734">
    <property type="protein sequence ID" value="AAA35544.1"/>
    <property type="molecule type" value="mRNA"/>
</dbReference>
<dbReference type="EMBL" id="M18471">
    <property type="protein sequence ID" value="AAA35541.1"/>
    <property type="molecule type" value="mRNA"/>
</dbReference>
<dbReference type="EMBL" id="X03045">
    <property type="protein sequence ID" value="CAA26850.1"/>
    <property type="molecule type" value="mRNA"/>
</dbReference>
<dbReference type="EMBL" id="M10374">
    <property type="protein sequence ID" value="AAA51750.1"/>
    <property type="molecule type" value="mRNA"/>
</dbReference>
<dbReference type="EMBL" id="M12413">
    <property type="protein sequence ID" value="AAA51742.1"/>
    <property type="molecule type" value="mRNA"/>
</dbReference>
<dbReference type="EMBL" id="M36676">
    <property type="protein sequence ID" value="AAA35548.1"/>
    <property type="molecule type" value="mRNA"/>
</dbReference>
<dbReference type="CCDS" id="CCDS1703.1"/>
<dbReference type="PIR" id="A27850">
    <property type="entry name" value="LPHUB"/>
</dbReference>
<dbReference type="RefSeq" id="NP_000375.3">
    <property type="nucleotide sequence ID" value="NM_000384.3"/>
</dbReference>
<dbReference type="PDB" id="9BD1">
    <property type="method" value="EM"/>
    <property type="resolution" value="5.40 A"/>
    <property type="chains" value="A=1-4563"/>
</dbReference>
<dbReference type="PDB" id="9BD8">
    <property type="method" value="EM"/>
    <property type="resolution" value="4.80 A"/>
    <property type="chains" value="A=1-4563"/>
</dbReference>
<dbReference type="PDB" id="9BDE">
    <property type="method" value="EM"/>
    <property type="resolution" value="4.18 A"/>
    <property type="chains" value="A=1-4563"/>
</dbReference>
<dbReference type="PDB" id="9BDT">
    <property type="method" value="EM"/>
    <property type="resolution" value="5.40 A"/>
    <property type="chains" value="A=1-4563"/>
</dbReference>
<dbReference type="PDB" id="9COO">
    <property type="method" value="EM"/>
    <property type="resolution" value="3.73 A"/>
    <property type="chains" value="A=1-4563"/>
</dbReference>
<dbReference type="PDB" id="9E9R">
    <property type="method" value="EM"/>
    <property type="resolution" value="9.00 A"/>
    <property type="chains" value="A=1-4563"/>
</dbReference>
<dbReference type="PDB" id="9EA7">
    <property type="method" value="EM"/>
    <property type="resolution" value="9.00 A"/>
    <property type="chains" value="A=1-4563"/>
</dbReference>
<dbReference type="PDB" id="9EAG">
    <property type="method" value="EM"/>
    <property type="resolution" value="9.00 A"/>
    <property type="chains" value="A=1-4563"/>
</dbReference>
<dbReference type="PDBsum" id="9BD1"/>
<dbReference type="PDBsum" id="9BD8"/>
<dbReference type="PDBsum" id="9BDE"/>
<dbReference type="PDBsum" id="9BDT"/>
<dbReference type="PDBsum" id="9COO"/>
<dbReference type="PDBsum" id="9E9R"/>
<dbReference type="PDBsum" id="9EA7"/>
<dbReference type="PDBsum" id="9EAG"/>
<dbReference type="EMDB" id="EMD-44443"/>
<dbReference type="EMDB" id="EMD-44446"/>
<dbReference type="EMDB" id="EMD-44450"/>
<dbReference type="EMDB" id="EMD-44469"/>
<dbReference type="EMDB" id="EMD-45787"/>
<dbReference type="EMDB" id="EMD-47801"/>
<dbReference type="SMR" id="P04114"/>
<dbReference type="BioGRID" id="106835">
    <property type="interactions" value="240"/>
</dbReference>
<dbReference type="CORUM" id="P04114"/>
<dbReference type="DIP" id="DIP-44767N"/>
<dbReference type="FunCoup" id="P04114">
    <property type="interactions" value="735"/>
</dbReference>
<dbReference type="IntAct" id="P04114">
    <property type="interactions" value="105"/>
</dbReference>
<dbReference type="MINT" id="P04114"/>
<dbReference type="STRING" id="9606.ENSP00000233242"/>
<dbReference type="BindingDB" id="P04114"/>
<dbReference type="ChEMBL" id="CHEMBL4549"/>
<dbReference type="DrugBank" id="DB11886">
    <property type="generic name" value="Infigratinib"/>
</dbReference>
<dbReference type="DrugBank" id="DB05528">
    <property type="generic name" value="Mipomersen"/>
</dbReference>
<dbReference type="DrugBank" id="DB00877">
    <property type="generic name" value="Sirolimus"/>
</dbReference>
<dbReference type="DrugBank" id="DB00460">
    <property type="generic name" value="Verteporfin"/>
</dbReference>
<dbReference type="DrugBank" id="DB14533">
    <property type="generic name" value="Zinc chloride"/>
</dbReference>
<dbReference type="DrugBank" id="DB14548">
    <property type="generic name" value="Zinc sulfate, unspecified form"/>
</dbReference>
<dbReference type="CarbonylDB" id="P04114"/>
<dbReference type="GlyConnect" id="57">
    <property type="glycosylation" value="67 N-Linked glycans (13 sites)"/>
</dbReference>
<dbReference type="GlyCosmos" id="P04114">
    <property type="glycosylation" value="27 sites, 83 glycans"/>
</dbReference>
<dbReference type="GlyGen" id="P04114">
    <property type="glycosylation" value="35 sites, 136 N-linked glycans (17 sites), 3 O-linked glycans (10 sites)"/>
</dbReference>
<dbReference type="iPTMnet" id="P04114"/>
<dbReference type="PhosphoSitePlus" id="P04114"/>
<dbReference type="SwissPalm" id="P04114"/>
<dbReference type="BioMuta" id="APOB"/>
<dbReference type="DMDM" id="300669605"/>
<dbReference type="CPTAC" id="CPTAC-1299"/>
<dbReference type="CPTAC" id="CPTAC-1300"/>
<dbReference type="CPTAC" id="CPTAC-2205"/>
<dbReference type="CPTAC" id="CPTAC-652"/>
<dbReference type="CPTAC" id="CPTAC-653"/>
<dbReference type="CPTAC" id="non-CPTAC-1080"/>
<dbReference type="CPTAC" id="non-CPTAC-1081"/>
<dbReference type="CPTAC" id="non-CPTAC-1082"/>
<dbReference type="jPOST" id="P04114"/>
<dbReference type="MassIVE" id="P04114"/>
<dbReference type="PaxDb" id="9606-ENSP00000233242"/>
<dbReference type="PeptideAtlas" id="P04114"/>
<dbReference type="PRIDE" id="P04114"/>
<dbReference type="ProteomicsDB" id="51654"/>
<dbReference type="Pumba" id="P04114"/>
<dbReference type="ABCD" id="P04114">
    <property type="antibodies" value="1 sequenced antibody"/>
</dbReference>
<dbReference type="Antibodypedia" id="4232">
    <property type="antibodies" value="1132 antibodies from 44 providers"/>
</dbReference>
<dbReference type="CPTC" id="P04114">
    <property type="antibodies" value="3 antibodies"/>
</dbReference>
<dbReference type="DNASU" id="338"/>
<dbReference type="Ensembl" id="ENST00000233242.5">
    <property type="protein sequence ID" value="ENSP00000233242.1"/>
    <property type="gene ID" value="ENSG00000084674.15"/>
</dbReference>
<dbReference type="GeneID" id="338"/>
<dbReference type="KEGG" id="hsa:338"/>
<dbReference type="MANE-Select" id="ENST00000233242.5">
    <property type="protein sequence ID" value="ENSP00000233242.1"/>
    <property type="RefSeq nucleotide sequence ID" value="NM_000384.3"/>
    <property type="RefSeq protein sequence ID" value="NP_000375.3"/>
</dbReference>
<dbReference type="UCSC" id="uc002red.3">
    <property type="organism name" value="human"/>
</dbReference>
<dbReference type="AGR" id="HGNC:603"/>
<dbReference type="CTD" id="338"/>
<dbReference type="DisGeNET" id="338"/>
<dbReference type="GeneCards" id="APOB"/>
<dbReference type="GeneReviews" id="APOB"/>
<dbReference type="HGNC" id="HGNC:603">
    <property type="gene designation" value="APOB"/>
</dbReference>
<dbReference type="HPA" id="ENSG00000084674">
    <property type="expression patterns" value="Group enriched (intestine, liver)"/>
</dbReference>
<dbReference type="MalaCards" id="APOB"/>
<dbReference type="MIM" id="107730">
    <property type="type" value="gene"/>
</dbReference>
<dbReference type="MIM" id="144010">
    <property type="type" value="phenotype"/>
</dbReference>
<dbReference type="MIM" id="615558">
    <property type="type" value="phenotype"/>
</dbReference>
<dbReference type="neXtProt" id="NX_P04114"/>
<dbReference type="OpenTargets" id="ENSG00000084674"/>
<dbReference type="Orphanet" id="391665">
    <property type="disease" value="Homozygous familial hypercholesterolemia"/>
</dbReference>
<dbReference type="PharmGKB" id="PA50"/>
<dbReference type="VEuPathDB" id="HostDB:ENSG00000084674"/>
<dbReference type="eggNOG" id="KOG4338">
    <property type="taxonomic scope" value="Eukaryota"/>
</dbReference>
<dbReference type="GeneTree" id="ENSGT00590000083139"/>
<dbReference type="InParanoid" id="P04114"/>
<dbReference type="OMA" id="FTCAYEN"/>
<dbReference type="OrthoDB" id="6484170at2759"/>
<dbReference type="PAN-GO" id="P04114">
    <property type="GO annotations" value="9 GO annotations based on evolutionary models"/>
</dbReference>
<dbReference type="PhylomeDB" id="P04114"/>
<dbReference type="TreeFam" id="TF331316"/>
<dbReference type="PathwayCommons" id="P04114"/>
<dbReference type="Reactome" id="R-HSA-202733">
    <property type="pathway name" value="Cell surface interactions at the vascular wall"/>
</dbReference>
<dbReference type="Reactome" id="R-HSA-3000471">
    <property type="pathway name" value="Scavenging by Class B Receptors"/>
</dbReference>
<dbReference type="Reactome" id="R-HSA-3000480">
    <property type="pathway name" value="Scavenging by Class A Receptors"/>
</dbReference>
<dbReference type="Reactome" id="R-HSA-3000484">
    <property type="pathway name" value="Scavenging by Class F Receptors"/>
</dbReference>
<dbReference type="Reactome" id="R-HSA-3000497">
    <property type="pathway name" value="Scavenging by Class H Receptors"/>
</dbReference>
<dbReference type="Reactome" id="R-HSA-381426">
    <property type="pathway name" value="Regulation of Insulin-like Growth Factor (IGF) transport and uptake by Insulin-like Growth Factor Binding Proteins (IGFBPs)"/>
</dbReference>
<dbReference type="Reactome" id="R-HSA-432142">
    <property type="pathway name" value="Platelet sensitization by LDL"/>
</dbReference>
<dbReference type="Reactome" id="R-HSA-5686938">
    <property type="pathway name" value="Regulation of TLR by endogenous ligand"/>
</dbReference>
<dbReference type="Reactome" id="R-HSA-8856825">
    <property type="pathway name" value="Cargo recognition for clathrin-mediated endocytosis"/>
</dbReference>
<dbReference type="Reactome" id="R-HSA-8856828">
    <property type="pathway name" value="Clathrin-mediated endocytosis"/>
</dbReference>
<dbReference type="Reactome" id="R-HSA-8866423">
    <property type="pathway name" value="VLDL assembly"/>
</dbReference>
<dbReference type="Reactome" id="R-HSA-8957275">
    <property type="pathway name" value="Post-translational protein phosphorylation"/>
</dbReference>
<dbReference type="Reactome" id="R-HSA-8963888">
    <property type="pathway name" value="Chylomicron assembly"/>
</dbReference>
<dbReference type="Reactome" id="R-HSA-8963901">
    <property type="pathway name" value="Chylomicron remodeling"/>
</dbReference>
<dbReference type="Reactome" id="R-HSA-8964026">
    <property type="pathway name" value="Chylomicron clearance"/>
</dbReference>
<dbReference type="Reactome" id="R-HSA-8964038">
    <property type="pathway name" value="LDL clearance"/>
</dbReference>
<dbReference type="Reactome" id="R-HSA-8964041">
    <property type="pathway name" value="LDL remodeling"/>
</dbReference>
<dbReference type="Reactome" id="R-HSA-8964046">
    <property type="pathway name" value="VLDL clearance"/>
</dbReference>
<dbReference type="Reactome" id="R-HSA-9707616">
    <property type="pathway name" value="Heme signaling"/>
</dbReference>
<dbReference type="Reactome" id="R-HSA-975634">
    <property type="pathway name" value="Retinoid metabolism and transport"/>
</dbReference>
<dbReference type="SignaLink" id="P04114"/>
<dbReference type="SIGNOR" id="P04114"/>
<dbReference type="BioGRID-ORCS" id="338">
    <property type="hits" value="12 hits in 1151 CRISPR screens"/>
</dbReference>
<dbReference type="ChiTaRS" id="APOB">
    <property type="organism name" value="human"/>
</dbReference>
<dbReference type="GeneWiki" id="Apolipoprotein_B"/>
<dbReference type="GenomeRNAi" id="338"/>
<dbReference type="Pharos" id="P04114">
    <property type="development level" value="Tchem"/>
</dbReference>
<dbReference type="PRO" id="PR:P04114"/>
<dbReference type="Proteomes" id="UP000005640">
    <property type="component" value="Chromosome 2"/>
</dbReference>
<dbReference type="RNAct" id="P04114">
    <property type="molecule type" value="protein"/>
</dbReference>
<dbReference type="Bgee" id="ENSG00000084674">
    <property type="expression patterns" value="Expressed in jejunal mucosa and 86 other cell types or tissues"/>
</dbReference>
<dbReference type="ExpressionAtlas" id="P04114">
    <property type="expression patterns" value="baseline and differential"/>
</dbReference>
<dbReference type="GO" id="GO:0042627">
    <property type="term" value="C:chylomicron"/>
    <property type="evidence" value="ECO:0000314"/>
    <property type="project" value="BHF-UCL"/>
</dbReference>
<dbReference type="GO" id="GO:0034360">
    <property type="term" value="C:chylomicron remnant"/>
    <property type="evidence" value="ECO:0000304"/>
    <property type="project" value="BHF-UCL"/>
</dbReference>
<dbReference type="GO" id="GO:0030669">
    <property type="term" value="C:clathrin-coated endocytic vesicle membrane"/>
    <property type="evidence" value="ECO:0000304"/>
    <property type="project" value="Reactome"/>
</dbReference>
<dbReference type="GO" id="GO:0005737">
    <property type="term" value="C:cytoplasm"/>
    <property type="evidence" value="ECO:0000314"/>
    <property type="project" value="UniProtKB"/>
</dbReference>
<dbReference type="GO" id="GO:0005829">
    <property type="term" value="C:cytosol"/>
    <property type="evidence" value="ECO:0000314"/>
    <property type="project" value="HPA"/>
</dbReference>
<dbReference type="GO" id="GO:0005769">
    <property type="term" value="C:early endosome"/>
    <property type="evidence" value="ECO:0000304"/>
    <property type="project" value="Reactome"/>
</dbReference>
<dbReference type="GO" id="GO:0071682">
    <property type="term" value="C:endocytic vesicle lumen"/>
    <property type="evidence" value="ECO:0000304"/>
    <property type="project" value="Reactome"/>
</dbReference>
<dbReference type="GO" id="GO:0070971">
    <property type="term" value="C:endoplasmic reticulum exit site"/>
    <property type="evidence" value="ECO:0000314"/>
    <property type="project" value="UniProtKB"/>
</dbReference>
<dbReference type="GO" id="GO:0005788">
    <property type="term" value="C:endoplasmic reticulum lumen"/>
    <property type="evidence" value="ECO:0000304"/>
    <property type="project" value="Reactome"/>
</dbReference>
<dbReference type="GO" id="GO:0005789">
    <property type="term" value="C:endoplasmic reticulum membrane"/>
    <property type="evidence" value="ECO:0000304"/>
    <property type="project" value="Reactome"/>
</dbReference>
<dbReference type="GO" id="GO:0031904">
    <property type="term" value="C:endosome lumen"/>
    <property type="evidence" value="ECO:0000304"/>
    <property type="project" value="Reactome"/>
</dbReference>
<dbReference type="GO" id="GO:0010008">
    <property type="term" value="C:endosome membrane"/>
    <property type="evidence" value="ECO:0000304"/>
    <property type="project" value="Reactome"/>
</dbReference>
<dbReference type="GO" id="GO:0070062">
    <property type="term" value="C:extracellular exosome"/>
    <property type="evidence" value="ECO:0007005"/>
    <property type="project" value="UniProtKB"/>
</dbReference>
<dbReference type="GO" id="GO:0005576">
    <property type="term" value="C:extracellular region"/>
    <property type="evidence" value="ECO:0007005"/>
    <property type="project" value="BHF-UCL"/>
</dbReference>
<dbReference type="GO" id="GO:0005615">
    <property type="term" value="C:extracellular space"/>
    <property type="evidence" value="ECO:0000314"/>
    <property type="project" value="UniProt"/>
</dbReference>
<dbReference type="GO" id="GO:0034363">
    <property type="term" value="C:intermediate-density lipoprotein particle"/>
    <property type="evidence" value="ECO:0000314"/>
    <property type="project" value="BHF-UCL"/>
</dbReference>
<dbReference type="GO" id="GO:0043231">
    <property type="term" value="C:intracellular membrane-bounded organelle"/>
    <property type="evidence" value="ECO:0000314"/>
    <property type="project" value="HPA"/>
</dbReference>
<dbReference type="GO" id="GO:0005811">
    <property type="term" value="C:lipid droplet"/>
    <property type="evidence" value="ECO:0007669"/>
    <property type="project" value="UniProtKB-SubCell"/>
</dbReference>
<dbReference type="GO" id="GO:0034362">
    <property type="term" value="C:low-density lipoprotein particle"/>
    <property type="evidence" value="ECO:0000314"/>
    <property type="project" value="BHF-UCL"/>
</dbReference>
<dbReference type="GO" id="GO:0043202">
    <property type="term" value="C:lysosomal lumen"/>
    <property type="evidence" value="ECO:0000304"/>
    <property type="project" value="Reactome"/>
</dbReference>
<dbReference type="GO" id="GO:0034359">
    <property type="term" value="C:mature chylomicron"/>
    <property type="evidence" value="ECO:0000314"/>
    <property type="project" value="BHF-UCL"/>
</dbReference>
<dbReference type="GO" id="GO:0043025">
    <property type="term" value="C:neuronal cell body"/>
    <property type="evidence" value="ECO:0000314"/>
    <property type="project" value="MGI"/>
</dbReference>
<dbReference type="GO" id="GO:0005886">
    <property type="term" value="C:plasma membrane"/>
    <property type="evidence" value="ECO:0000304"/>
    <property type="project" value="Reactome"/>
</dbReference>
<dbReference type="GO" id="GO:0005790">
    <property type="term" value="C:smooth endoplasmic reticulum"/>
    <property type="evidence" value="ECO:0000304"/>
    <property type="project" value="Reactome"/>
</dbReference>
<dbReference type="GO" id="GO:0034361">
    <property type="term" value="C:very-low-density lipoprotein particle"/>
    <property type="evidence" value="ECO:0000314"/>
    <property type="project" value="BHF-UCL"/>
</dbReference>
<dbReference type="GO" id="GO:0120020">
    <property type="term" value="F:cholesterol transfer activity"/>
    <property type="evidence" value="ECO:0000315"/>
    <property type="project" value="BHF-UCL"/>
</dbReference>
<dbReference type="GO" id="GO:0008201">
    <property type="term" value="F:heparin binding"/>
    <property type="evidence" value="ECO:0000314"/>
    <property type="project" value="BHF-UCL"/>
</dbReference>
<dbReference type="GO" id="GO:0035473">
    <property type="term" value="F:lipase binding"/>
    <property type="evidence" value="ECO:0000353"/>
    <property type="project" value="BHF-UCL"/>
</dbReference>
<dbReference type="GO" id="GO:0050750">
    <property type="term" value="F:low-density lipoprotein particle receptor binding"/>
    <property type="evidence" value="ECO:0000315"/>
    <property type="project" value="BHF-UCL"/>
</dbReference>
<dbReference type="GO" id="GO:0005543">
    <property type="term" value="F:phospholipid binding"/>
    <property type="evidence" value="ECO:0000314"/>
    <property type="project" value="BHF-UCL"/>
</dbReference>
<dbReference type="GO" id="GO:0048018">
    <property type="term" value="F:receptor ligand activity"/>
    <property type="evidence" value="ECO:0000314"/>
    <property type="project" value="UniProt"/>
</dbReference>
<dbReference type="GO" id="GO:0048844">
    <property type="term" value="P:artery morphogenesis"/>
    <property type="evidence" value="ECO:0007669"/>
    <property type="project" value="Ensembl"/>
</dbReference>
<dbReference type="GO" id="GO:0071402">
    <property type="term" value="P:cellular response to lipoprotein particle stimulus"/>
    <property type="evidence" value="ECO:0000314"/>
    <property type="project" value="UniProt"/>
</dbReference>
<dbReference type="GO" id="GO:0033344">
    <property type="term" value="P:cholesterol efflux"/>
    <property type="evidence" value="ECO:0007669"/>
    <property type="project" value="Ensembl"/>
</dbReference>
<dbReference type="GO" id="GO:0042632">
    <property type="term" value="P:cholesterol homeostasis"/>
    <property type="evidence" value="ECO:0000315"/>
    <property type="project" value="BHF-UCL"/>
</dbReference>
<dbReference type="GO" id="GO:0008203">
    <property type="term" value="P:cholesterol metabolic process"/>
    <property type="evidence" value="ECO:0000315"/>
    <property type="project" value="BHF-UCL"/>
</dbReference>
<dbReference type="GO" id="GO:0030301">
    <property type="term" value="P:cholesterol transport"/>
    <property type="evidence" value="ECO:0000315"/>
    <property type="project" value="BHF-UCL"/>
</dbReference>
<dbReference type="GO" id="GO:0051649">
    <property type="term" value="P:establishment of localization in cell"/>
    <property type="evidence" value="ECO:0007669"/>
    <property type="project" value="Ensembl"/>
</dbReference>
<dbReference type="GO" id="GO:0009566">
    <property type="term" value="P:fertilization"/>
    <property type="evidence" value="ECO:0007669"/>
    <property type="project" value="Ensembl"/>
</dbReference>
<dbReference type="GO" id="GO:0030317">
    <property type="term" value="P:flagellated sperm motility"/>
    <property type="evidence" value="ECO:0007669"/>
    <property type="project" value="Ensembl"/>
</dbReference>
<dbReference type="GO" id="GO:0001701">
    <property type="term" value="P:in utero embryonic development"/>
    <property type="evidence" value="ECO:0007669"/>
    <property type="project" value="Ensembl"/>
</dbReference>
<dbReference type="GO" id="GO:0042158">
    <property type="term" value="P:lipoprotein biosynthetic process"/>
    <property type="evidence" value="ECO:0007669"/>
    <property type="project" value="Ensembl"/>
</dbReference>
<dbReference type="GO" id="GO:0042159">
    <property type="term" value="P:lipoprotein catabolic process"/>
    <property type="evidence" value="ECO:0007669"/>
    <property type="project" value="Ensembl"/>
</dbReference>
<dbReference type="GO" id="GO:0042953">
    <property type="term" value="P:lipoprotein transport"/>
    <property type="evidence" value="ECO:0000318"/>
    <property type="project" value="GO_Central"/>
</dbReference>
<dbReference type="GO" id="GO:0034383">
    <property type="term" value="P:low-density lipoprotein particle clearance"/>
    <property type="evidence" value="ECO:0000315"/>
    <property type="project" value="BHF-UCL"/>
</dbReference>
<dbReference type="GO" id="GO:0034374">
    <property type="term" value="P:low-density lipoprotein particle remodeling"/>
    <property type="evidence" value="ECO:0000315"/>
    <property type="project" value="BHF-UCL"/>
</dbReference>
<dbReference type="GO" id="GO:0007399">
    <property type="term" value="P:nervous system development"/>
    <property type="evidence" value="ECO:0007669"/>
    <property type="project" value="Ensembl"/>
</dbReference>
<dbReference type="GO" id="GO:0010886">
    <property type="term" value="P:positive regulation of cholesterol storage"/>
    <property type="evidence" value="ECO:0000314"/>
    <property type="project" value="BHF-UCL"/>
</dbReference>
<dbReference type="GO" id="GO:0010628">
    <property type="term" value="P:positive regulation of gene expression"/>
    <property type="evidence" value="ECO:0007669"/>
    <property type="project" value="Ensembl"/>
</dbReference>
<dbReference type="GO" id="GO:0010884">
    <property type="term" value="P:positive regulation of lipid storage"/>
    <property type="evidence" value="ECO:0000314"/>
    <property type="project" value="BHF-UCL"/>
</dbReference>
<dbReference type="GO" id="GO:0010744">
    <property type="term" value="P:positive regulation of macrophage derived foam cell differentiation"/>
    <property type="evidence" value="ECO:0000314"/>
    <property type="project" value="BHF-UCL"/>
</dbReference>
<dbReference type="GO" id="GO:0009791">
    <property type="term" value="P:post-embryonic development"/>
    <property type="evidence" value="ECO:0007669"/>
    <property type="project" value="Ensembl"/>
</dbReference>
<dbReference type="GO" id="GO:0045540">
    <property type="term" value="P:regulation of cholesterol biosynthetic process"/>
    <property type="evidence" value="ECO:0007669"/>
    <property type="project" value="Ensembl"/>
</dbReference>
<dbReference type="GO" id="GO:0009615">
    <property type="term" value="P:response to virus"/>
    <property type="evidence" value="ECO:0000270"/>
    <property type="project" value="UniProtKB"/>
</dbReference>
<dbReference type="GO" id="GO:0007283">
    <property type="term" value="P:spermatogenesis"/>
    <property type="evidence" value="ECO:0007669"/>
    <property type="project" value="Ensembl"/>
</dbReference>
<dbReference type="GO" id="GO:0019433">
    <property type="term" value="P:triglyceride catabolic process"/>
    <property type="evidence" value="ECO:0007669"/>
    <property type="project" value="Ensembl"/>
</dbReference>
<dbReference type="GO" id="GO:0006642">
    <property type="term" value="P:triglyceride mobilization"/>
    <property type="evidence" value="ECO:0000318"/>
    <property type="project" value="GO_Central"/>
</dbReference>
<dbReference type="GO" id="GO:0034379">
    <property type="term" value="P:very-low-density lipoprotein particle assembly"/>
    <property type="evidence" value="ECO:0000305"/>
    <property type="project" value="BHF-UCL"/>
</dbReference>
<dbReference type="FunFam" id="1.25.10.20:FF:000004">
    <property type="entry name" value="Apolipoprotein B"/>
    <property type="match status" value="1"/>
</dbReference>
<dbReference type="FunFam" id="2.30.230.10:FF:000003">
    <property type="entry name" value="Apolipoprotein B"/>
    <property type="match status" value="1"/>
</dbReference>
<dbReference type="FunFam" id="2.20.80.10:FF:000002">
    <property type="entry name" value="Apolipoprotein B-100"/>
    <property type="match status" value="1"/>
</dbReference>
<dbReference type="Gene3D" id="2.30.230.10">
    <property type="entry name" value="Lipovitellin, beta-sheet shell regions, chain A"/>
    <property type="match status" value="1"/>
</dbReference>
<dbReference type="Gene3D" id="2.20.80.10">
    <property type="entry name" value="Lipovitellin-phosvitin complex, chain A, domain 4"/>
    <property type="match status" value="1"/>
</dbReference>
<dbReference type="Gene3D" id="2.20.50.20">
    <property type="entry name" value="Lipovitellin. Chain A, domain 3"/>
    <property type="match status" value="1"/>
</dbReference>
<dbReference type="Gene3D" id="1.25.10.20">
    <property type="entry name" value="Vitellinogen, superhelical"/>
    <property type="match status" value="1"/>
</dbReference>
<dbReference type="InterPro" id="IPR022176">
    <property type="entry name" value="ApoB100_C"/>
</dbReference>
<dbReference type="InterPro" id="IPR052418">
    <property type="entry name" value="Apolipoprotein_B"/>
</dbReference>
<dbReference type="InterPro" id="IPR016024">
    <property type="entry name" value="ARM-type_fold"/>
</dbReference>
<dbReference type="InterPro" id="IPR015819">
    <property type="entry name" value="Lipid_transp_b-sht_shell"/>
</dbReference>
<dbReference type="InterPro" id="IPR009454">
    <property type="entry name" value="Lipid_transpt_open_b-sht"/>
</dbReference>
<dbReference type="InterPro" id="IPR011030">
    <property type="entry name" value="Lipovitellin_superhlx_dom"/>
</dbReference>
<dbReference type="InterPro" id="IPR015816">
    <property type="entry name" value="Vitellinogen_b-sht_N"/>
</dbReference>
<dbReference type="InterPro" id="IPR015255">
    <property type="entry name" value="Vitellinogen_open_b-sht"/>
</dbReference>
<dbReference type="InterPro" id="IPR015817">
    <property type="entry name" value="Vitellinogen_open_b-sht_sub1"/>
</dbReference>
<dbReference type="InterPro" id="IPR001747">
    <property type="entry name" value="Vitellogenin_N"/>
</dbReference>
<dbReference type="PANTHER" id="PTHR13769">
    <property type="entry name" value="APOLIPOPROTEIN B"/>
    <property type="match status" value="1"/>
</dbReference>
<dbReference type="PANTHER" id="PTHR13769:SF1">
    <property type="entry name" value="APOLIPOPROTEIN B-100"/>
    <property type="match status" value="1"/>
</dbReference>
<dbReference type="Pfam" id="PF12491">
    <property type="entry name" value="ApoB100_C"/>
    <property type="match status" value="1"/>
</dbReference>
<dbReference type="Pfam" id="PF06448">
    <property type="entry name" value="DUF1081"/>
    <property type="match status" value="1"/>
</dbReference>
<dbReference type="Pfam" id="PF09172">
    <property type="entry name" value="Vit_open_b-sht"/>
    <property type="match status" value="1"/>
</dbReference>
<dbReference type="Pfam" id="PF01347">
    <property type="entry name" value="Vitellogenin_N"/>
    <property type="match status" value="1"/>
</dbReference>
<dbReference type="SMART" id="SM01169">
    <property type="entry name" value="DUF1943"/>
    <property type="match status" value="1"/>
</dbReference>
<dbReference type="SMART" id="SM00638">
    <property type="entry name" value="LPD_N"/>
    <property type="match status" value="1"/>
</dbReference>
<dbReference type="SUPFAM" id="SSF48371">
    <property type="entry name" value="ARM repeat"/>
    <property type="match status" value="1"/>
</dbReference>
<dbReference type="SUPFAM" id="SSF56968">
    <property type="entry name" value="Lipovitellin-phosvitin complex, beta-sheet shell regions"/>
    <property type="match status" value="2"/>
</dbReference>
<dbReference type="SUPFAM" id="SSF48431">
    <property type="entry name" value="Lipovitellin-phosvitin complex, superhelical domain"/>
    <property type="match status" value="1"/>
</dbReference>
<dbReference type="PROSITE" id="PS51211">
    <property type="entry name" value="VITELLOGENIN"/>
    <property type="match status" value="1"/>
</dbReference>
<reference key="1">
    <citation type="journal article" date="1986" name="Nucleic Acids Res.">
        <title>Complete cDNA and derived protein sequence of human apolipoprotein B-100.</title>
        <authorList>
            <person name="Knott T.C."/>
            <person name="Wallis S.C."/>
            <person name="Powell L.M."/>
            <person name="Pease R.J."/>
            <person name="Lusis A.J."/>
            <person name="Blackhart B."/>
            <person name="McCarthy B.J."/>
            <person name="Mahley R.W."/>
            <person name="Levy-Wilson B."/>
            <person name="Scott J."/>
        </authorList>
    </citation>
    <scope>NUCLEOTIDE SEQUENCE [MRNA]</scope>
    <scope>VARIANTS ASN-273; GLU-1218; VAL-2092; VAL-2313; THR-2365; GLN-2680; HIS-3319; LYS-3427; GLU-3432; THR-3732; LEU-3949; PHE-3964; LYS-4181 AND ASN-4338</scope>
</reference>
<reference key="2">
    <citation type="journal article" date="1987" name="DNA">
        <title>DNA sequence of the human apolipoprotein B gene.</title>
        <authorList>
            <person name="Ludwig E.H."/>
            <person name="Blackhart B.D."/>
            <person name="Pierotti V.R."/>
            <person name="Caiati L."/>
            <person name="Fortier C."/>
            <person name="Knott T."/>
            <person name="Scott J."/>
            <person name="Mahley R.W."/>
            <person name="Levy-Wilson B."/>
            <person name="McCarthy B.J."/>
        </authorList>
    </citation>
    <scope>NUCLEOTIDE SEQUENCE [GENOMIC DNA]</scope>
    <scope>VARIANTS VAL-2313; HIS-3319; LYS-3427; GLU-3432 AND ASN-4338</scope>
</reference>
<reference key="3">
    <citation type="journal article" date="1986" name="J. Biol. Chem.">
        <title>The complete cDNA and amino acid sequence of human apolipoprotein B-100.</title>
        <authorList>
            <person name="Chen S.-H."/>
            <person name="Yang C.-Y."/>
            <person name="Chen P.-F."/>
            <person name="Setzer D."/>
            <person name="Tanimura M."/>
            <person name="Li W.-H."/>
            <person name="Gotto A.M. Jr."/>
            <person name="Chan L."/>
        </authorList>
    </citation>
    <scope>NUCLEOTIDE SEQUENCE [MRNA]</scope>
    <scope>VARIANTS ILE-98; VAL-618; VAL-2313; HIS-3319; LYS-3427; GLU-3432 AND ASN-4338</scope>
</reference>
<reference key="4">
    <citation type="journal article" date="1986" name="Proc. Natl. Acad. Sci. U.S.A.">
        <title>Human liver apolipoprotein B-100 cDNA: complete nucleic acid and derived amino acid sequence.</title>
        <authorList>
            <person name="Law S.W."/>
            <person name="Grant S.M."/>
            <person name="Higuchi K."/>
            <person name="Hospattankar A.V."/>
            <person name="Lackner K.J."/>
            <person name="Lee N."/>
            <person name="Brewer H.B. Jr."/>
        </authorList>
    </citation>
    <scope>NUCLEOTIDE SEQUENCE [MRNA]</scope>
    <scope>VARIANTS ASN-2037; VAL-2313; HIS-3319; LYS-3427; GLU-3432; LEU-3949; LYS-4181 AND ASN-4338</scope>
</reference>
<reference key="5">
    <citation type="journal article" date="1986" name="EMBO J.">
        <title>The complete sequence and structural analysis of human apolipoprotein B-100: relationship between apoB-100 and apoB-48 forms.</title>
        <authorList>
            <person name="Cladaras C."/>
            <person name="Hadzopoulou-Cladaras M."/>
            <person name="Nolte R.T."/>
            <person name="Atkinson D."/>
            <person name="Zannis V.I."/>
        </authorList>
    </citation>
    <scope>NUCLEOTIDE SEQUENCE [MRNA]</scope>
    <scope>NUCLEOTIDE SEQUENCE [GENOMIC DNA] OF 1-40</scope>
    <scope>VARIANTS VAL-618; VAL-2313; HIS-3319; LYS-3427; GLU-3432; THR-3732; LEU-3949; PHE-3964; LYS-4181 AND ASN-4338</scope>
</reference>
<reference key="6">
    <citation type="submission" date="2003-06" db="EMBL/GenBank/DDBJ databases">
        <authorList>
            <consortium name="SeattleSNPs variation discovery resource"/>
        </authorList>
    </citation>
    <scope>NUCLEOTIDE SEQUENCE [GENOMIC DNA]</scope>
    <scope>VARIANTS VAL-2313 AND ASN-4338</scope>
</reference>
<reference key="7">
    <citation type="journal article" date="2005" name="Nature">
        <title>Generation and annotation of the DNA sequences of human chromosomes 2 and 4.</title>
        <authorList>
            <person name="Hillier L.W."/>
            <person name="Graves T.A."/>
            <person name="Fulton R.S."/>
            <person name="Fulton L.A."/>
            <person name="Pepin K.H."/>
            <person name="Minx P."/>
            <person name="Wagner-McPherson C."/>
            <person name="Layman D."/>
            <person name="Wylie K."/>
            <person name="Sekhon M."/>
            <person name="Becker M.C."/>
            <person name="Fewell G.A."/>
            <person name="Delehaunty K.D."/>
            <person name="Miner T.L."/>
            <person name="Nash W.E."/>
            <person name="Kremitzki C."/>
            <person name="Oddy L."/>
            <person name="Du H."/>
            <person name="Sun H."/>
            <person name="Bradshaw-Cordum H."/>
            <person name="Ali J."/>
            <person name="Carter J."/>
            <person name="Cordes M."/>
            <person name="Harris A."/>
            <person name="Isak A."/>
            <person name="van Brunt A."/>
            <person name="Nguyen C."/>
            <person name="Du F."/>
            <person name="Courtney L."/>
            <person name="Kalicki J."/>
            <person name="Ozersky P."/>
            <person name="Abbott S."/>
            <person name="Armstrong J."/>
            <person name="Belter E.A."/>
            <person name="Caruso L."/>
            <person name="Cedroni M."/>
            <person name="Cotton M."/>
            <person name="Davidson T."/>
            <person name="Desai A."/>
            <person name="Elliott G."/>
            <person name="Erb T."/>
            <person name="Fronick C."/>
            <person name="Gaige T."/>
            <person name="Haakenson W."/>
            <person name="Haglund K."/>
            <person name="Holmes A."/>
            <person name="Harkins R."/>
            <person name="Kim K."/>
            <person name="Kruchowski S.S."/>
            <person name="Strong C.M."/>
            <person name="Grewal N."/>
            <person name="Goyea E."/>
            <person name="Hou S."/>
            <person name="Levy A."/>
            <person name="Martinka S."/>
            <person name="Mead K."/>
            <person name="McLellan M.D."/>
            <person name="Meyer R."/>
            <person name="Randall-Maher J."/>
            <person name="Tomlinson C."/>
            <person name="Dauphin-Kohlberg S."/>
            <person name="Kozlowicz-Reilly A."/>
            <person name="Shah N."/>
            <person name="Swearengen-Shahid S."/>
            <person name="Snider J."/>
            <person name="Strong J.T."/>
            <person name="Thompson J."/>
            <person name="Yoakum M."/>
            <person name="Leonard S."/>
            <person name="Pearman C."/>
            <person name="Trani L."/>
            <person name="Radionenko M."/>
            <person name="Waligorski J.E."/>
            <person name="Wang C."/>
            <person name="Rock S.M."/>
            <person name="Tin-Wollam A.-M."/>
            <person name="Maupin R."/>
            <person name="Latreille P."/>
            <person name="Wendl M.C."/>
            <person name="Yang S.-P."/>
            <person name="Pohl C."/>
            <person name="Wallis J.W."/>
            <person name="Spieth J."/>
            <person name="Bieri T.A."/>
            <person name="Berkowicz N."/>
            <person name="Nelson J.O."/>
            <person name="Osborne J."/>
            <person name="Ding L."/>
            <person name="Meyer R."/>
            <person name="Sabo A."/>
            <person name="Shotland Y."/>
            <person name="Sinha P."/>
            <person name="Wohldmann P.E."/>
            <person name="Cook L.L."/>
            <person name="Hickenbotham M.T."/>
            <person name="Eldred J."/>
            <person name="Williams D."/>
            <person name="Jones T.A."/>
            <person name="She X."/>
            <person name="Ciccarelli F.D."/>
            <person name="Izaurralde E."/>
            <person name="Taylor J."/>
            <person name="Schmutz J."/>
            <person name="Myers R.M."/>
            <person name="Cox D.R."/>
            <person name="Huang X."/>
            <person name="McPherson J.D."/>
            <person name="Mardis E.R."/>
            <person name="Clifton S.W."/>
            <person name="Warren W.C."/>
            <person name="Chinwalla A.T."/>
            <person name="Eddy S.R."/>
            <person name="Marra M.A."/>
            <person name="Ovcharenko I."/>
            <person name="Furey T.S."/>
            <person name="Miller W."/>
            <person name="Eichler E.E."/>
            <person name="Bork P."/>
            <person name="Suyama M."/>
            <person name="Torrents D."/>
            <person name="Waterston R.H."/>
            <person name="Wilson R.K."/>
        </authorList>
    </citation>
    <scope>NUCLEOTIDE SEQUENCE [LARGE SCALE GENOMIC DNA]</scope>
    <scope>VARIANT TYR-1422</scope>
</reference>
<reference key="8">
    <citation type="journal article" date="1986" name="Proc. Natl. Acad. Sci. U.S.A.">
        <title>Analysis of cDNA clones encoding the entire B-26 region of human apolipoprotein B.</title>
        <authorList>
            <person name="Protter A.A."/>
            <person name="Hardman D.A."/>
            <person name="Sato K.Y."/>
            <person name="Schilling J.W."/>
            <person name="Yamanaka M."/>
            <person name="Hort Y.J."/>
            <person name="Hjerrild K.A."/>
            <person name="Chen G.C."/>
            <person name="Kane J.P."/>
        </authorList>
    </citation>
    <scope>NUCLEOTIDE SEQUENCE [MRNA] OF 1-1670</scope>
    <scope>VARIANTS ILE-98 AND ASP-1670</scope>
</reference>
<reference key="9">
    <citation type="journal article" date="1986" name="Proc. Natl. Acad. Sci. U.S.A.">
        <title>Isolation of a cDNA clone encoding the amino-terminal region of human apolipoprotein B.</title>
        <authorList>
            <person name="Protter A.A."/>
            <person name="Hardman D.A."/>
            <person name="Schilling J.W."/>
            <person name="Miller J."/>
            <person name="Appleby V."/>
            <person name="Chen G.C."/>
            <person name="Kirsher S.W."/>
            <person name="McEnroe G."/>
            <person name="Kane J.P."/>
        </authorList>
    </citation>
    <scope>NUCLEOTIDE SEQUENCE [MRNA] OF 1-291</scope>
</reference>
<reference key="10">
    <citation type="journal article" date="1990" name="Proc. Natl. Acad. Sci. U.S.A.">
        <title>Isolation and characterization of sulfhydryl and disulfide peptides of human apolipoprotein B-100.</title>
        <authorList>
            <person name="Yang C.Y."/>
            <person name="Kim T.W."/>
            <person name="Weng S.A."/>
            <person name="Lee B.R."/>
            <person name="Yang M.L."/>
            <person name="Gotto A.M. Jr."/>
        </authorList>
    </citation>
    <scope>PARTIAL PROTEIN SEQUENCE</scope>
    <scope>DISULFIDE BONDS</scope>
    <scope>VARIANT ILE-98</scope>
</reference>
<reference key="11">
    <citation type="journal article" date="1985" name="Proc. Natl. Acad. Sci. U.S.A.">
        <title>Human apolipoprotein B-100: cloning, analysis of liver mRNA, and assignment of the gene to chromosome 2.</title>
        <authorList>
            <person name="Law S.W."/>
            <person name="Lackner K.J."/>
            <person name="Hospattankar A.V."/>
            <person name="Anchors J.M."/>
            <person name="Sakaguchi A.Y."/>
            <person name="Naylor S.L."/>
            <person name="Brewer H.B. Jr."/>
        </authorList>
    </citation>
    <scope>NUCLEOTIDE SEQUENCE [MRNA] OF 485-1044</scope>
    <source>
        <tissue>Liver</tissue>
    </source>
</reference>
<reference key="12">
    <citation type="journal article" date="1985" name="Proc. Natl. Acad. Sci. U.S.A.">
        <title>A partial cDNA clone for human apolipoprotein B.</title>
        <authorList>
            <person name="Deeb S.S."/>
            <person name="Motulsky A.G."/>
            <person name="Albers J.J."/>
        </authorList>
    </citation>
    <scope>NUCLEOTIDE SEQUENCE [MRNA] OF 709-906</scope>
</reference>
<reference key="13">
    <citation type="journal article" date="1984" name="FEBS Lett.">
        <title>Human apolipoprotein B: partial amino acid sequence.</title>
        <authorList>
            <person name="LeBoeuf R.C."/>
            <person name="Miller C."/>
            <person name="Shively J.E."/>
            <person name="Schumaker V.N."/>
            <person name="Balla M.A."/>
            <person name="Lusis A.J."/>
        </authorList>
    </citation>
    <scope>PROTEIN SEQUENCE OF 873-896 AND 3113-3137</scope>
</reference>
<reference key="14">
    <citation type="journal article" date="1989" name="J. Biol. Chem.">
        <title>Hypobetalipoproteinemia due to an apolipoprotein B gene exon 21 deletion derived by Alu-Alu recombination.</title>
        <authorList>
            <person name="Huang L.S."/>
            <person name="Ripps M.E."/>
            <person name="Korman S.H."/>
            <person name="Deckelbaum R.J."/>
            <person name="Breslow J.L."/>
        </authorList>
    </citation>
    <scope>NUCLEOTIDE SEQUENCE [GENOMIC DNA] OF 1042-1232</scope>
</reference>
<reference key="15">
    <citation type="journal article" date="1986" name="Gene">
        <title>Analysis of the human apolipoprotein B gene; complete structure of the B-74 region.</title>
        <authorList>
            <person name="Carlsson P."/>
            <person name="Darnfors C."/>
            <person name="Olofsson S.O."/>
            <person name="Bjursell G."/>
        </authorList>
    </citation>
    <scope>NUCLEOTIDE SEQUENCE [MRNA] OF 1282-4503</scope>
    <scope>VARIANTS VAL-2313; HIS-3319; LYS-3427; GLU-3432; THR-3732 AND ASN-4338</scope>
</reference>
<reference key="16">
    <citation type="journal article" date="1987" name="Biochemistry">
        <title>Structural comparison of human apolipoproteins B-48 and B-100.</title>
        <authorList>
            <person name="Hardman D.A."/>
            <person name="Protter A.A."/>
            <person name="Chen G.C."/>
            <person name="Schilling J.W."/>
            <person name="Sato K.Y."/>
            <person name="Lau K."/>
            <person name="Yamanaka M."/>
            <person name="Mikita T."/>
            <person name="Miller J."/>
            <person name="Crisp T."/>
            <person name="McEnroe G."/>
            <person name="Scarborough R.M."/>
            <person name="Kane J.P."/>
        </authorList>
    </citation>
    <scope>NUCLEOTIDE SEQUENCE [MRNA] OF 1671-2398</scope>
    <scope>VARIANT VAL-2313</scope>
</reference>
<reference key="17">
    <citation type="journal article" date="1985" name="Nucleic Acids Res.">
        <title>Molecular cloning of human apolipoprotein B cDNA.</title>
        <authorList>
            <person name="Carlsson P."/>
            <person name="Olofsson S.O."/>
            <person name="Bondjers G."/>
            <person name="Darnfors C."/>
            <person name="Wiklund O."/>
            <person name="Bjursell G."/>
        </authorList>
    </citation>
    <scope>NUCLEOTIDE SEQUENCE [MRNA] OF 1937-2018 AND 3811-4334</scope>
</reference>
<reference key="18">
    <citation type="journal article" date="1987" name="Cell">
        <title>A novel form of tissue-specific RNA processing produces apolipoprotein-B48 in intestine.</title>
        <authorList>
            <person name="Powell L.M."/>
            <person name="Wallis S.C."/>
            <person name="Pease R.J."/>
            <person name="Edwards Y.H."/>
            <person name="Knott T.J."/>
            <person name="Scott J."/>
        </authorList>
    </citation>
    <scope>NUCLEOTIDE SEQUENCE [MRNA] OF 2115-2179</scope>
    <scope>RNA EDITING</scope>
    <source>
        <tissue>Small intestine</tissue>
    </source>
</reference>
<reference key="19">
    <citation type="journal article" date="1988" name="Proc. Natl. Acad. Sci. U.S.A.">
        <title>Human apolipoprotein B (apoB) mRNA: identification of two distinct apoB mRNAs, an mRNA with the apoB-100 sequence and an apoB mRNA containing a premature in-frame translational stop codon, in both liver and intestine.</title>
        <authorList>
            <person name="Higuchi K."/>
            <person name="Hospattankar A.V."/>
            <person name="Law S.W."/>
            <person name="Meglin N."/>
            <person name="Cortright J."/>
            <person name="Brewer H.B. Jr."/>
        </authorList>
    </citation>
    <scope>NUCLEOTIDE SEQUENCE [MRNA] OF 2127-2179</scope>
    <scope>RNA EDITING</scope>
</reference>
<reference key="20">
    <citation type="journal article" date="1987" name="Biochem. Biophys. Res. Commun.">
        <title>Carboxyl terminal analysis of human B-48 protein confirms the novel mechanism proposed for chain termination.</title>
        <authorList>
            <person name="Hardman D.A."/>
            <person name="Protter A.A."/>
            <person name="Schilling J.W."/>
            <person name="Kane J.P."/>
        </authorList>
    </citation>
    <scope>NUCLEOTIDE SEQUENCE [MRNA] OF 2129-2235</scope>
    <scope>RNA EDITING</scope>
</reference>
<reference key="21">
    <citation type="journal article" date="1987" name="Biochem. Biophys. Res. Commun.">
        <title>Identification of a novel in-frame translational stop codon in human intestine apoB mRNA.</title>
        <authorList>
            <person name="Hospattankar A.V."/>
            <person name="Higuchi K."/>
            <person name="Law S.W."/>
            <person name="Meglin N."/>
            <person name="Brewer H.B. Jr."/>
        </authorList>
    </citation>
    <scope>PROTEIN SEQUENCE OF 2169-2179</scope>
</reference>
<reference key="22">
    <citation type="journal article" date="1985" name="Nucleic Acids Res.">
        <title>Human apolipoprotein B: identification of cDNA clones and characterization of mRNA.</title>
        <authorList>
            <person name="Mehrabian M."/>
            <person name="Schumaker V.N."/>
            <person name="Fareed G.C."/>
            <person name="West R."/>
            <person name="Johnson D.F."/>
            <person name="Kirchgessner T.G."/>
            <person name="Lin H.-C."/>
            <person name="Wang X."/>
            <person name="Ma Y."/>
            <person name="Mendiaz E."/>
            <person name="Lusis A.J."/>
        </authorList>
    </citation>
    <scope>NUCLEOTIDE SEQUENCE [MRNA] OF 3056-3159</scope>
</reference>
<reference key="23">
    <citation type="journal article" date="1985" name="Science">
        <title>Human apolipoprotein B: structure of carboxyl-terminal domains, sites of gene expression, and chromosomal localization.</title>
        <authorList>
            <person name="Knott T.J."/>
            <person name="Rall S.C. Jr."/>
            <person name="Innerarity T.L."/>
            <person name="Jacobson S.F."/>
            <person name="Urdea M.S."/>
            <person name="Levy-Wilson B."/>
            <person name="Powell L.M."/>
            <person name="Pease R.J."/>
            <person name="Eddy R."/>
            <person name="Nakai H."/>
            <person name="Byers M."/>
            <person name="Priestley L.M."/>
            <person name="Robertson E."/>
            <person name="Rall L.B."/>
            <person name="Betsholtz C."/>
            <person name="Shows T.B."/>
            <person name="Mahley R.W."/>
            <person name="Scott J."/>
        </authorList>
    </citation>
    <scope>NUCLEOTIDE SEQUENCE [MRNA] OF 3109-4563</scope>
    <scope>VARIANTS HIS-3319; LYS-3427; GLU-3432; THR-3732; LEU-3949; PHE-3964; LYS-4181 AND ASN-4338</scope>
</reference>
<reference key="24">
    <citation type="journal article" date="1985" name="Proc. Natl. Acad. Sci. U.S.A.">
        <title>Molecular cloning and expression of partial cDNAs and deduced amino acid sequence of a carboxyl-terminal fragment of human apolipoprotein B-100.</title>
        <authorList>
            <person name="Wei C.F."/>
            <person name="Chen S.H."/>
            <person name="Yang C.Y."/>
            <person name="Marcel Y.L."/>
            <person name="Milne R.W."/>
            <person name="Li W.H."/>
            <person name="Sparrow J.T."/>
            <person name="Gotto A.M. Jr."/>
            <person name="Chan L."/>
        </authorList>
    </citation>
    <scope>NUCLEOTIDE SEQUENCE [MRNA] OF 3728-4563</scope>
    <scope>VARIANT ASN-4338</scope>
</reference>
<reference key="25">
    <citation type="journal article" date="1985" name="Atherosclerosis">
        <title>Molecular cloning of human LDL apolipoprotein B cDNA. Evidence for more than one gene per haploid genome.</title>
        <authorList>
            <person name="Shoulders C.C."/>
            <person name="Myant N.B."/>
            <person name="Sidoli A."/>
            <person name="Rodriguez J.C."/>
            <person name="Cortese C."/>
            <person name="Baralle F.E."/>
            <person name="Cortese R."/>
        </authorList>
    </citation>
    <scope>NUCLEOTIDE SEQUENCE [MRNA] OF 3846-4298</scope>
    <scope>VARIANTS LEU-3949; PHE-3964 AND LYS-4181</scope>
    <source>
        <tissue>Liver</tissue>
    </source>
</reference>
<reference key="26">
    <citation type="journal article" date="1986" name="Biol. Chem. Hoppe-Seyler">
        <title>Isolation, expression and characterization of a human apolipoprotein B 100-specific cDNA clone.</title>
        <authorList>
            <person name="Pfitzner R."/>
            <person name="Wagener R."/>
            <person name="Stoffel W."/>
        </authorList>
    </citation>
    <scope>NUCLEOTIDE SEQUENCE [MRNA] OF 4217-4563</scope>
</reference>
<reference key="27">
    <citation type="journal article" date="1987" name="Science">
        <title>Apolipoprotein B-48 is the product of a messenger RNA with an organ-specific in-frame stop codon.</title>
        <authorList>
            <person name="Chen S.-H."/>
            <person name="Habib G."/>
            <person name="Yang C.-H."/>
            <person name="Gu Z.-W."/>
            <person name="Lee B.R."/>
            <person name="Weng S.-H."/>
            <person name="Silberman S.R."/>
            <person name="Cai S.-J."/>
            <person name="Deslypere J.P."/>
            <person name="Rosseneu M."/>
            <person name="Gotto A.M. Jr."/>
            <person name="Li W.-H."/>
            <person name="Chan L."/>
        </authorList>
    </citation>
    <scope>PARTIAL PROTEIN SEQUENCE</scope>
    <scope>IDENTIFICATION OF APO-B48</scope>
    <scope>RNA EDITING</scope>
</reference>
<reference key="28">
    <citation type="journal article" date="1986" name="Nature">
        <title>Complete protein sequence and identification of structural domains of human apolipoprotein B.</title>
        <authorList>
            <person name="Knott T.C."/>
            <person name="Pease R.J."/>
            <person name="Powell L.M."/>
            <person name="Wallis S.C."/>
            <person name="Rall S.C. Jr."/>
            <person name="Innerarity T.L."/>
            <person name="Blackhart B."/>
            <person name="Taylor W.R."/>
            <person name="Marcel Y."/>
            <person name="Milne R."/>
            <person name="Johnson D."/>
            <person name="Fuller M."/>
            <person name="Lusis A.J."/>
            <person name="McCarthy B.J."/>
            <person name="Mahley R.W."/>
            <person name="Levy-Wilson B."/>
            <person name="Scott J."/>
        </authorList>
    </citation>
    <scope>DOMAINS</scope>
</reference>
<reference key="29">
    <citation type="journal article" date="1986" name="Nature">
        <title>Sequence, structure, receptor-binding domains and internal repeats of human apolipoprotein B-100.</title>
        <authorList>
            <person name="Yang C.-Y."/>
            <person name="Chen S.-H."/>
            <person name="Gianturco S.H."/>
            <person name="Bradley W.A."/>
            <person name="Sparrow J.T."/>
            <person name="Tanimura M."/>
            <person name="Li W.-H."/>
            <person name="Sparrow D.A."/>
            <person name="Deloof H."/>
            <person name="Rosseneu M."/>
            <person name="Lee F.-S."/>
            <person name="Gu Z.-W."/>
            <person name="Gotto A.M. Jr."/>
            <person name="Chan L."/>
        </authorList>
    </citation>
    <scope>DOMAINS</scope>
</reference>
<reference key="30">
    <citation type="journal article" date="1986" name="Biochem. Biophys. Res. Commun.">
        <title>Apolipoprotein B is a calcium binding protein.</title>
        <authorList>
            <person name="Dashti N."/>
            <person name="Lee D.M."/>
            <person name="Mok T."/>
        </authorList>
    </citation>
    <scope>CALCIUM-BINDING</scope>
</reference>
<reference key="31">
    <citation type="journal article" date="2000" name="Mol. Biol. Cell">
        <title>Palmitoylation of apolipoprotein B is required for proper intracellular sorting and transport of cholesteroyl esters and triglycerides.</title>
        <authorList>
            <person name="Zhao Y."/>
            <person name="McCabe J.B."/>
            <person name="Vance J."/>
            <person name="Berthiaume L.G."/>
        </authorList>
    </citation>
    <scope>PALMITOYLATION AT CYS-1112</scope>
</reference>
<reference key="32">
    <citation type="journal article" date="2004" name="Proteomics">
        <title>Screening for N-glycosylated proteins by liquid chromatography mass spectrometry.</title>
        <authorList>
            <person name="Bunkenborg J."/>
            <person name="Pilch B.J."/>
            <person name="Podtelejnikov A.V."/>
            <person name="Wisniewski J.R."/>
        </authorList>
    </citation>
    <scope>GLYCOSYLATION [LARGE SCALE ANALYSIS] AT ASN-3358</scope>
    <source>
        <tissue>Plasma</tissue>
    </source>
</reference>
<reference key="33">
    <citation type="journal article" date="2005" name="J. Proteome Res.">
        <title>Human plasma N-glycoproteome analysis by immunoaffinity subtraction, hydrazide chemistry, and mass spectrometry.</title>
        <authorList>
            <person name="Liu T."/>
            <person name="Qian W.-J."/>
            <person name="Gritsenko M.A."/>
            <person name="Camp D.G. II"/>
            <person name="Monroe M.E."/>
            <person name="Moore R.J."/>
            <person name="Smith R.D."/>
        </authorList>
    </citation>
    <scope>GLYCOSYLATION [LARGE SCALE ANALYSIS] AT ASN-1523; ASN-2982; ASN-3465 AND ASN-3895</scope>
    <source>
        <tissue>Plasma</tissue>
    </source>
</reference>
<reference key="34">
    <citation type="journal article" date="2006" name="Cell. Microbiol.">
        <title>Transcriptomic and proteomic analyses of rhabdomyosarcoma cells reveal differential cellular gene expression in response to enterovirus 71 infection.</title>
        <authorList>
            <person name="Leong W.F."/>
            <person name="Chow V.T."/>
        </authorList>
    </citation>
    <scope>INDUCTION</scope>
    <scope>IDENTIFICATION BY MASS SPECTROMETRY</scope>
</reference>
<reference key="35">
    <citation type="journal article" date="2009" name="J. Proteome Res.">
        <title>Glycoproteomics analysis of human liver tissue by combination of multiple enzyme digestion and hydrazide chemistry.</title>
        <authorList>
            <person name="Chen R."/>
            <person name="Jiang X."/>
            <person name="Sun D."/>
            <person name="Han G."/>
            <person name="Wang F."/>
            <person name="Ye M."/>
            <person name="Wang L."/>
            <person name="Zou H."/>
        </authorList>
    </citation>
    <scope>GLYCOSYLATION [LARGE SCALE ANALYSIS] AT ASN-185; ASN-1523; ASN-2239; ASN-2779; ASN-2982; ASN-3101; ASN-3224; ASN-3411; ASN-3465 AND ASN-3895</scope>
    <source>
        <tissue>Liver</tissue>
    </source>
</reference>
<reference key="36">
    <citation type="journal article" date="2009" name="Science">
        <title>Lysine acetylation targets protein complexes and co-regulates major cellular functions.</title>
        <authorList>
            <person name="Choudhary C."/>
            <person name="Kumar C."/>
            <person name="Gnad F."/>
            <person name="Nielsen M.L."/>
            <person name="Rehman M."/>
            <person name="Walther T.C."/>
            <person name="Olsen J.V."/>
            <person name="Mann M."/>
        </authorList>
    </citation>
    <scope>ACETYLATION [LARGE SCALE ANALYSIS] AT LYS-2004</scope>
    <scope>IDENTIFICATION BY MASS SPECTROMETRY [LARGE SCALE ANALYSIS]</scope>
</reference>
<reference key="37">
    <citation type="journal article" date="2010" name="Nature">
        <title>Biological, clinical and population relevance of 95 loci for blood lipids.</title>
        <authorList>
            <person name="Teslovich T.M."/>
            <person name="Musunuru K."/>
            <person name="Smith A.V."/>
            <person name="Edmondson A.C."/>
            <person name="Stylianou I.M."/>
            <person name="Koseki M."/>
            <person name="Pirruccello J.P."/>
            <person name="Ripatti S."/>
            <person name="Chasman D.I."/>
            <person name="Willer C.J."/>
            <person name="Johansen C.T."/>
            <person name="Fouchier S.W."/>
            <person name="Isaacs A."/>
            <person name="Peloso G.M."/>
            <person name="Barbalic M."/>
            <person name="Ricketts S.L."/>
            <person name="Bis J.C."/>
            <person name="Aulchenko Y.S."/>
            <person name="Thorleifsson G."/>
            <person name="Feitosa M.F."/>
            <person name="Chambers J."/>
            <person name="Orho-Melander M."/>
            <person name="Melander O."/>
            <person name="Johnson T."/>
            <person name="Li X."/>
            <person name="Guo X."/>
            <person name="Li M."/>
            <person name="Shin Cho Y."/>
            <person name="Jin Go M."/>
            <person name="Jin Kim Y."/>
            <person name="Lee J.Y."/>
            <person name="Park T."/>
            <person name="Kim K."/>
            <person name="Sim X."/>
            <person name="Twee-Hee Ong R."/>
            <person name="Croteau-Chonka D.C."/>
            <person name="Lange L.A."/>
            <person name="Smith J.D."/>
            <person name="Song K."/>
            <person name="Hua Zhao J."/>
            <person name="Yuan X."/>
            <person name="Luan J."/>
            <person name="Lamina C."/>
            <person name="Ziegler A."/>
            <person name="Zhang W."/>
            <person name="Zee R.Y."/>
            <person name="Wright A.F."/>
            <person name="Witteman J.C."/>
            <person name="Wilson J.F."/>
            <person name="Willemsen G."/>
            <person name="Wichmann H.E."/>
            <person name="Whitfield J.B."/>
            <person name="Waterworth D.M."/>
            <person name="Wareham N.J."/>
            <person name="Waeber G."/>
            <person name="Vollenweider P."/>
            <person name="Voight B.F."/>
            <person name="Vitart V."/>
            <person name="Uitterlinden A.G."/>
            <person name="Uda M."/>
            <person name="Tuomilehto J."/>
            <person name="Thompson J.R."/>
            <person name="Tanaka T."/>
            <person name="Surakka I."/>
            <person name="Stringham H.M."/>
            <person name="Spector T.D."/>
            <person name="Soranzo N."/>
            <person name="Smit J.H."/>
            <person name="Sinisalo J."/>
            <person name="Silander K."/>
            <person name="Sijbrands E.J."/>
            <person name="Scuteri A."/>
            <person name="Scott J."/>
            <person name="Schlessinger D."/>
            <person name="Sanna S."/>
            <person name="Salomaa V."/>
            <person name="Saharinen J."/>
            <person name="Sabatti C."/>
            <person name="Ruokonen A."/>
            <person name="Rudan I."/>
            <person name="Rose L.M."/>
            <person name="Roberts R."/>
            <person name="Rieder M."/>
            <person name="Psaty B.M."/>
            <person name="Pramstaller P.P."/>
            <person name="Pichler I."/>
            <person name="Perola M."/>
            <person name="Penninx B.W."/>
            <person name="Pedersen N.L."/>
            <person name="Pattaro C."/>
            <person name="Parker A.N."/>
            <person name="Pare G."/>
            <person name="Oostra B.A."/>
            <person name="O'Donnell C.J."/>
            <person name="Nieminen M.S."/>
            <person name="Nickerson D.A."/>
            <person name="Montgomery G.W."/>
            <person name="Meitinger T."/>
            <person name="McPherson R."/>
            <person name="McCarthy M.I."/>
            <person name="McArdle W."/>
            <person name="Masson D."/>
            <person name="Martin N.G."/>
            <person name="Marroni F."/>
            <person name="Mangino M."/>
            <person name="Magnusson P.K."/>
            <person name="Lucas G."/>
            <person name="Luben R."/>
            <person name="Loos R.J."/>
            <person name="Lokki M.L."/>
            <person name="Lettre G."/>
            <person name="Langenberg C."/>
            <person name="Launer L.J."/>
            <person name="Lakatta E.G."/>
            <person name="Laaksonen R."/>
            <person name="Kyvik K.O."/>
            <person name="Kronenberg F."/>
            <person name="Konig I.R."/>
            <person name="Khaw K.T."/>
            <person name="Kaprio J."/>
            <person name="Kaplan L.M."/>
            <person name="Johansson A."/>
            <person name="Jarvelin M.R."/>
            <person name="Janssens A.C."/>
            <person name="Ingelsson E."/>
            <person name="Igl W."/>
            <person name="Kees Hovingh G."/>
            <person name="Hottenga J.J."/>
            <person name="Hofman A."/>
            <person name="Hicks A.A."/>
            <person name="Hengstenberg C."/>
            <person name="Heid I.M."/>
            <person name="Hayward C."/>
            <person name="Havulinna A.S."/>
            <person name="Hastie N.D."/>
            <person name="Harris T.B."/>
            <person name="Haritunians T."/>
            <person name="Hall A.S."/>
            <person name="Gyllensten U."/>
            <person name="Guiducci C."/>
            <person name="Groop L.C."/>
            <person name="Gonzalez E."/>
            <person name="Gieger C."/>
            <person name="Freimer N.B."/>
            <person name="Ferrucci L."/>
            <person name="Erdmann J."/>
            <person name="Elliott P."/>
            <person name="Ejebe K.G."/>
            <person name="Doring A."/>
            <person name="Dominiczak A.F."/>
            <person name="Demissie S."/>
            <person name="Deloukas P."/>
            <person name="de Geus E.J."/>
            <person name="de Faire U."/>
            <person name="Crawford G."/>
            <person name="Collins F.S."/>
            <person name="Chen Y.D."/>
            <person name="Caulfield M.J."/>
            <person name="Campbell H."/>
            <person name="Burtt N.P."/>
            <person name="Bonnycastle L.L."/>
            <person name="Boomsma D.I."/>
            <person name="Boekholdt S.M."/>
            <person name="Bergman R.N."/>
            <person name="Barroso I."/>
            <person name="Bandinelli S."/>
            <person name="Ballantyne C.M."/>
            <person name="Assimes T.L."/>
            <person name="Quertermous T."/>
            <person name="Altshuler D."/>
            <person name="Seielstad M."/>
            <person name="Wong T.Y."/>
            <person name="Tai E.S."/>
            <person name="Feranil A.B."/>
            <person name="Kuzawa C.W."/>
            <person name="Adair L.S."/>
            <person name="Taylor H.A. Jr."/>
            <person name="Borecki I.B."/>
            <person name="Gabriel S.B."/>
            <person name="Wilson J.G."/>
            <person name="Holm H."/>
            <person name="Thorsteinsdottir U."/>
            <person name="Gudnason V."/>
            <person name="Krauss R.M."/>
            <person name="Mohlke K.L."/>
            <person name="Ordovas J.M."/>
            <person name="Munroe P.B."/>
            <person name="Kooner J.S."/>
            <person name="Tall A.R."/>
            <person name="Hegele R.A."/>
            <person name="Kastelein J.J."/>
            <person name="Schadt E.E."/>
            <person name="Rotter J.I."/>
            <person name="Boerwinkle E."/>
            <person name="Strachan D.P."/>
            <person name="Mooser V."/>
            <person name="Stefansson K."/>
            <person name="Reilly M.P."/>
            <person name="Samani N.J."/>
            <person name="Schunkert H."/>
            <person name="Cupples L.A."/>
            <person name="Sandhu M.S."/>
            <person name="Ridker P.M."/>
            <person name="Rader D.J."/>
            <person name="van Duijn C.M."/>
            <person name="Peltonen L."/>
            <person name="Abecasis G.R."/>
            <person name="Boehnke M."/>
            <person name="Kathiresan S."/>
        </authorList>
    </citation>
    <scope>INVOLVEMENT IN LDLCQ4</scope>
    <scope>VARIANT ILE-98</scope>
</reference>
<reference key="38">
    <citation type="journal article" date="2011" name="BMC Syst. Biol.">
        <title>Initial characterization of the human central proteome.</title>
        <authorList>
            <person name="Burkard T.R."/>
            <person name="Planyavsky M."/>
            <person name="Kaupe I."/>
            <person name="Breitwieser F.P."/>
            <person name="Buerckstuemmer T."/>
            <person name="Bennett K.L."/>
            <person name="Superti-Furga G."/>
            <person name="Colinge J."/>
        </authorList>
    </citation>
    <scope>IDENTIFICATION BY MASS SPECTROMETRY [LARGE SCALE ANALYSIS]</scope>
</reference>
<reference key="39">
    <citation type="journal article" date="2011" name="J. Clin. Lipidol.">
        <title>A novel mutation of apolipoprotein B in a French Canadian family with homozygous hypobetalipoproteinemia.</title>
        <authorList>
            <person name="Gangloff A."/>
            <person name="Bergeron J."/>
            <person name="Couture P."/>
            <person name="Martins R."/>
            <person name="Hegele R.A."/>
            <person name="Gagne C."/>
        </authorList>
    </citation>
    <scope>INVOLVEMENT IN FHBL1</scope>
</reference>
<reference key="40">
    <citation type="journal article" date="2012" name="Arterioscler. Thromb. Vasc. Biol.">
        <title>Proprotein convertase subtilisin/kexin type 9 interacts with apolipoprotein B and prevents its intracellular degradation, irrespective of the low-density lipoprotein receptor.</title>
        <authorList>
            <person name="Sun H."/>
            <person name="Samarghandi A."/>
            <person name="Zhang N."/>
            <person name="Yao Z."/>
            <person name="Xiong M."/>
            <person name="Teng B.B."/>
        </authorList>
    </citation>
    <scope>SUBCELLULAR LOCATION</scope>
    <scope>INTERACTION WITH PCSK9</scope>
</reference>
<reference key="41">
    <citation type="journal article" date="2014" name="EMBO Rep.">
        <title>C to U RNA editing mediated by APOBEC1 requires RNA-binding protein RBM47.</title>
        <authorList>
            <person name="Fossat N."/>
            <person name="Tourle K."/>
            <person name="Radziewic T."/>
            <person name="Barratt K."/>
            <person name="Liebhold D."/>
            <person name="Studdert J.B."/>
            <person name="Power M."/>
            <person name="Jones V."/>
            <person name="Loebel D.A."/>
            <person name="Tam P.P."/>
        </authorList>
    </citation>
    <scope>RNA EDITING</scope>
</reference>
<reference key="42">
    <citation type="journal article" date="2014" name="J. Proteomics">
        <title>An enzyme assisted RP-RPLC approach for in-depth analysis of human liver phosphoproteome.</title>
        <authorList>
            <person name="Bian Y."/>
            <person name="Song C."/>
            <person name="Cheng K."/>
            <person name="Dong M."/>
            <person name="Wang F."/>
            <person name="Huang J."/>
            <person name="Sun D."/>
            <person name="Wang L."/>
            <person name="Ye M."/>
            <person name="Zou H."/>
        </authorList>
    </citation>
    <scope>PHOSPHORYLATION [LARGE SCALE ANALYSIS] AT SER-3279; SER-4048 AND THR-4052</scope>
    <scope>IDENTIFICATION BY MASS SPECTROMETRY [LARGE SCALE ANALYSIS]</scope>
    <source>
        <tissue>Liver</tissue>
    </source>
</reference>
<reference key="43">
    <citation type="journal article" date="2015" name="Cell">
        <title>A single kinase generates the majority of the secreted phosphoproteome.</title>
        <authorList>
            <person name="Tagliabracci V.S."/>
            <person name="Wiley S.E."/>
            <person name="Guo X."/>
            <person name="Kinch L.N."/>
            <person name="Durrant E."/>
            <person name="Wen J."/>
            <person name="Xiao J."/>
            <person name="Cui J."/>
            <person name="Nguyen K.B."/>
            <person name="Engel J.L."/>
            <person name="Coon J.J."/>
            <person name="Grishin N."/>
            <person name="Pinna L.A."/>
            <person name="Pagliarini D.J."/>
            <person name="Dixon J.E."/>
        </authorList>
    </citation>
    <scope>PHOSPHORYLATION AT SER-4048</scope>
</reference>
<reference key="44">
    <citation type="journal article" date="2015" name="Circ. Cardiovasc. Genet.">
        <title>A novel abetalipoproteinemia missense mutation highlights the importance of N-Terminal beta-barrel in microsomal triglyceride transfer protein function.</title>
        <authorList>
            <person name="Walsh M.T."/>
            <person name="Iqbal J."/>
            <person name="Josekutty J."/>
            <person name="Soh J."/>
            <person name="Di Leo E."/>
            <person name="Oezaydin E."/>
            <person name="Guenduez M."/>
            <person name="Tarugi P."/>
            <person name="Hussain M.M."/>
        </authorList>
    </citation>
    <scope>INTERACTION WITH MTTP</scope>
    <scope>SUBCELLULAR LOCATION</scope>
</reference>
<reference key="45">
    <citation type="journal article" date="2017" name="Arterioscler. Thromb. Vasc. Biol.">
        <title>AUP1 (Ancient Ubiquitous Protein 1) Is a Key Determinant of Hepatic Very-Low-Density Lipoprotein Assembly and Secretion.</title>
        <authorList>
            <person name="Zhang J."/>
            <person name="Zamani M."/>
            <person name="Thiele C."/>
            <person name="Taher J."/>
            <person name="Amir Alipour M."/>
            <person name="Yao Z."/>
            <person name="Adeli K."/>
        </authorList>
    </citation>
    <scope>INTERACTION WITH AUP1</scope>
    <scope>SUBCELLULAR LOCATION</scope>
</reference>
<reference key="46">
    <citation type="journal article" date="1990" name="Hum. Genet.">
        <title>Detection by denaturing gradient gel electrophoresis of a new polymorphism in the apolipoprotein B gene.</title>
        <authorList>
            <person name="Navajas M."/>
            <person name="Laurent A.-M."/>
            <person name="Moreel J.-F."/>
            <person name="Ragab A."/>
            <person name="Cambou J.-P."/>
            <person name="Cunny G."/>
            <person name="Cambien F."/>
            <person name="Roizes G."/>
        </authorList>
    </citation>
    <scope>VARIANT ASN-4338</scope>
</reference>
<reference key="47">
    <citation type="journal article" date="1989" name="Proc. Natl. Acad. Sci. U.S.A.">
        <title>Association between a specific apolipoprotein B mutation and familial defective apolipoprotein B-100.</title>
        <authorList>
            <person name="Soria L.F."/>
            <person name="Ludwig E.H."/>
            <person name="Clarke H.R.G."/>
            <person name="Vega G.L."/>
            <person name="Grundy S.M."/>
            <person name="McCarthy B.J."/>
        </authorList>
    </citation>
    <scope>VARIANT FHCL2 GLN-3527</scope>
</reference>
<reference key="48">
    <citation type="journal article" date="1990" name="Nucleic Acids Res.">
        <title>Sequence polymorphism in the human apoB gene at position 8344.</title>
        <authorList>
            <person name="Huang L.-S."/>
            <person name="Gavish D."/>
            <person name="Breslow J.L."/>
        </authorList>
    </citation>
    <scope>VARIANT LEU-2739</scope>
</reference>
<reference key="49">
    <citation type="journal article" date="1995" name="J. Clin. Invest.">
        <title>Familial ligand-defective apolipoprotein B. Identification of a new mutation that decreases LDL receptor binding affinity.</title>
        <authorList>
            <person name="Pullinger C.R."/>
            <person name="Hennessy L.K."/>
            <person name="Chatterton J.E."/>
            <person name="Liu W."/>
            <person name="Love J.A."/>
            <person name="Mendel C.M."/>
            <person name="Frost P.H."/>
            <person name="Malloy M.J."/>
            <person name="Schumaker V.N."/>
            <person name="Kane J.P."/>
        </authorList>
    </citation>
    <scope>VARIANT FHCL2 CYS-3558</scope>
</reference>
<reference key="50">
    <citation type="journal article" date="1996" name="Hum. Mutat.">
        <title>Detection of new variants in the apolipoprotein B (Apo B) gene by PCR-SSCP.</title>
        <authorList>
            <person name="Poirier O."/>
            <person name="Ricard S."/>
            <person name="Behague I."/>
            <person name="Souriau C."/>
            <person name="Evans A.E."/>
            <person name="Arveiler D."/>
            <person name="Marques-Vidal P."/>
            <person name="Luc G."/>
            <person name="Roizes G."/>
            <person name="Cambien F."/>
        </authorList>
    </citation>
    <scope>VARIANTS LEU-1437; SER-1914; LYS-2566; THR-3121; ALA-3945; MET-4128 AND THR-4481</scope>
</reference>
<reference key="51">
    <citation type="journal article" date="1997" name="Hum. Mutat.">
        <title>Familial ligand-defective apolipoprotein B-100: simultaneous detection of the Arg3500--&gt;Gln and Arg3531--&gt;Cys mutations in a French population.</title>
        <authorList>
            <person name="Rabes J.P."/>
            <person name="Varret M."/>
            <person name="Saint-Jore B."/>
            <person name="Erlich D."/>
            <person name="Jondeau G."/>
            <person name="Krempf M."/>
            <person name="Giraudet P."/>
            <person name="Junien C."/>
            <person name="Boileau C."/>
        </authorList>
    </citation>
    <scope>VARIANTS FHCL2 GLN-3527 AND CYS-3558</scope>
</reference>
<reference key="52">
    <citation type="journal article" date="1998" name="Hum. Genet.">
        <title>Screening for mutations of the apolipoprotein B gene causing hypocholesterolemia.</title>
        <authorList>
            <person name="Leren T.P."/>
            <person name="Bakken K.S."/>
            <person name="Hoel V."/>
            <person name="Hjermann I."/>
            <person name="Berg K."/>
        </authorList>
    </citation>
    <scope>VARIANTS SER-1914; ARG-1923; LEU-2739; HIS-3319; LYS-3427; GLU-3432 AND ILE-3921</scope>
</reference>
<reference key="53">
    <citation type="journal article" date="2003" name="J. Biol. Chem.">
        <title>A novel nontruncating APOB gene mutation, R463W, causes familial hypobetalipoproteinemia.</title>
        <authorList>
            <person name="Burnett J.R."/>
            <person name="Shan J."/>
            <person name="Miskie B.A."/>
            <person name="Whitfield A.J."/>
            <person name="Yuan J."/>
            <person name="Tran K."/>
            <person name="McKnight C.J."/>
            <person name="Hegele R.A."/>
            <person name="Yao Z."/>
        </authorList>
    </citation>
    <scope>VARIANT FHBL1 TRP-490</scope>
    <scope>VARIANT ILE-98</scope>
    <scope>CHARACTERIZATION OF VARIANT TRP-490</scope>
    <scope>MUTAGENESIS OF ASP-483 AND ARG-490</scope>
</reference>
<reference key="54">
    <citation type="journal article" date="2004" name="Biochim. Biophys. Acta">
        <title>Hypobetalipoproteinemia with an apparently recessive inheritance due to a 'de novo' mutation of apolipoprotein B.</title>
        <authorList>
            <person name="Lancellotti S."/>
            <person name="Di Leo E."/>
            <person name="Penacchioni J.Y."/>
            <person name="Balli F."/>
            <person name="Viola L."/>
            <person name="Bertolini S."/>
            <person name="Calandra S."/>
            <person name="Tarugi P."/>
        </authorList>
    </citation>
    <scope>VARIANT HIS-1128</scope>
</reference>
<reference key="55">
    <citation type="journal article" date="2006" name="Science">
        <title>The consensus coding sequences of human breast and colorectal cancers.</title>
        <authorList>
            <person name="Sjoeblom T."/>
            <person name="Jones S."/>
            <person name="Wood L.D."/>
            <person name="Parsons D.W."/>
            <person name="Lin J."/>
            <person name="Barber T.D."/>
            <person name="Mandelker D."/>
            <person name="Leary R.J."/>
            <person name="Ptak J."/>
            <person name="Silliman N."/>
            <person name="Szabo S."/>
            <person name="Buckhaults P."/>
            <person name="Farrell C."/>
            <person name="Meeh P."/>
            <person name="Markowitz S.D."/>
            <person name="Willis J."/>
            <person name="Dawson D."/>
            <person name="Willson J.K.V."/>
            <person name="Gazdar A.F."/>
            <person name="Hartigan J."/>
            <person name="Wu L."/>
            <person name="Liu C."/>
            <person name="Parmigiani G."/>
            <person name="Park B.H."/>
            <person name="Bachman K.E."/>
            <person name="Papadopoulos N."/>
            <person name="Vogelstein B."/>
            <person name="Kinzler K.W."/>
            <person name="Velculescu V.E."/>
        </authorList>
    </citation>
    <scope>VARIANT [LARGE SCALE ANALYSIS] CYS-2564</scope>
</reference>
<reference key="56">
    <citation type="journal article" date="2011" name="Circulation">
        <title>Molecular basis of autosomal dominant hypercholesterolemia: assessment in a large cohort of hypercholesterolemic children.</title>
        <authorList>
            <person name="van der Graaf A."/>
            <person name="Avis H.J."/>
            <person name="Kusters D.M."/>
            <person name="Vissers M.N."/>
            <person name="Hutten B.A."/>
            <person name="Defesche J.C."/>
            <person name="Huijgen R."/>
            <person name="Fouchier S.W."/>
            <person name="Wijburg F.A."/>
            <person name="Kastelein J.J."/>
            <person name="Wiegman A."/>
        </authorList>
    </citation>
    <scope>VARIANT FHCL2 GLN-3527</scope>
</reference>
<reference key="57">
    <citation type="journal article" date="2011" name="J. Mol. Cell Biol.">
        <title>Quantitative detection of single amino acid polymorphisms by targeted proteomics.</title>
        <authorList>
            <person name="Su Z.D."/>
            <person name="Sun L."/>
            <person name="Yu D.X."/>
            <person name="Li R.X."/>
            <person name="Li H.X."/>
            <person name="Yu Z.J."/>
            <person name="Sheng Q.H."/>
            <person name="Lin X."/>
            <person name="Zeng R."/>
            <person name="Wu J.R."/>
        </authorList>
    </citation>
    <scope>VARIANTS GLU-1218; ASP-1670; ASN-2037; CYS-2564 AND LYS-2566</scope>
    <scope>IDENTIFICATION BY MASS SPECTROMETRY</scope>
</reference>
<reference key="58">
    <citation type="journal article" date="2012" name="Hum. Mutat.">
        <title>Genetic variation in APOB, PCSK9, and ANGPTL3 in carriers of pathogenic autosomal dominant hypercholesterolemic mutations with unexpected low LDL-Cl Levels.</title>
        <authorList>
            <person name="Huijgen R."/>
            <person name="Sjouke B."/>
            <person name="Vis K."/>
            <person name="de Randamie J.S."/>
            <person name="Defesche J.C."/>
            <person name="Kastelein J.J."/>
            <person name="Hovingh G.K."/>
            <person name="Fouchier S.W."/>
        </authorList>
    </citation>
    <scope>VARIANTS 12-LEU--LEU-14 DEL; ILE-98; VAL-618; ILE-730; THR-1613; ARG-1923; LYS-2566; LEU-2739; GLN-3638; LEU-3835; LYS-4181; THR-4270; VAL-4314; ASN-4338; THR-4481 AND VAL-4482</scope>
</reference>
<reference key="59">
    <citation type="journal article" date="2016" name="J. Clin. Lipidol.">
        <title>Novel APOB missense variants, A224T and V925L, in a black South African woman with marked hypocholesterolemia.</title>
        <authorList>
            <person name="Miller S.A."/>
            <person name="Hooper A.J."/>
            <person name="Mantiri G.A."/>
            <person name="Marais D."/>
            <person name="Tanyanyiwa D.M."/>
            <person name="McKnight J."/>
            <person name="Burnett J.R."/>
        </authorList>
    </citation>
    <scope>VARIANT FHBL1 LEU-952</scope>
    <scope>VARIANT THR-251</scope>
    <scope>CHARACTERIZATION OF VARIANT FHBL1 LEU-952</scope>
    <scope>CHARACTERIZATION OF VARIANT THR-251</scope>
    <scope>INTERACTION WITH MTTP</scope>
</reference>
<proteinExistence type="evidence at protein level"/>
<organism>
    <name type="scientific">Homo sapiens</name>
    <name type="common">Human</name>
    <dbReference type="NCBI Taxonomy" id="9606"/>
    <lineage>
        <taxon>Eukaryota</taxon>
        <taxon>Metazoa</taxon>
        <taxon>Chordata</taxon>
        <taxon>Craniata</taxon>
        <taxon>Vertebrata</taxon>
        <taxon>Euteleostomi</taxon>
        <taxon>Mammalia</taxon>
        <taxon>Eutheria</taxon>
        <taxon>Euarchontoglires</taxon>
        <taxon>Primates</taxon>
        <taxon>Haplorrhini</taxon>
        <taxon>Catarrhini</taxon>
        <taxon>Hominidae</taxon>
        <taxon>Homo</taxon>
    </lineage>
</organism>
<sequence>MDPPRPALLALLALPALLLLLLAGARAEEEMLENVSLVCPKDATRFKHLRKYTYNYEAESSSGVPGTADSRSATRINCKVELEVPQLCSFILKTSQCTLKEVYGFNPEGKALLKKTKNSEEFAAAMSRYELKLAIPEGKQVFLYPEKDEPTYILNIKRGIISALLVPPETEEAKQVLFLDTVYGNCSTHFTVKTRKGNVATEISTERDLGQCDRFKPIRTGISPLALIKGMTRPLSTLISSSQSCQYTLDAKRKHVAEAICKEQHLFLPFSYKNKYGMVAQVTQTLKLEDTPKINSRFFGEGTKKMGLAFESTKSTSPPKQAEAVLKTLQELKKLTISEQNIQRANLFNKLVTELRGLSDEAVTSLLPQLIEVSSPITLQALVQCGQPQCSTHILQWLKRVHANPLLIDVVTYLVALIPEPSAQQLREIFNMARDQRSRATLYALSHAVNNYHKTNPTGTQELLDIANYLMEQIQDDCTGDEDYTYLILRVIGNMGQTMEQLTPELKSSILKCVQSTKPSLMIQKAAIQALRKMEPKDKDQEVLLQTFLDDASPGDKRLAAYLMLMRSPSQADINKIVQILPWEQNEQVKNFVASHIANILNSEELDIQDLKKLVKEALKESQLPTVMDFRKFSRNYQLYKSVSLPSLDPASAKIEGNLIFDPNNYLPKESMLKTTLTAFGFASADLIEIGLEGKGFEPTLEALFGKQGFFPDSVNKALYWVNGQVPDGVSKVLVDHFGYTKDDKHEQDMVNGIMLSVEKLIKDLKSKEVPEARAYLRILGEELGFASLHDLQLLGKLLLMGARTLQGIPQMIGEVIRKGSKNDFFLHYIFMENAFELPTGAGLQLQISSSGVIAPGAKAGVKLEVANMQAELVAKPSVSVEFVTNMGIIIPDFARSGVQMNTNFFHESGLEAHVALKAGKLKFIIPSPKRPVKLLSGGNTLHLVSTTKTEVIPPLIENRQSWSVCKQVFPGLNYCTSGAYSNASSTDSASYYPLTGDTRLELELRPTGEIEQYSVSATYELQREDRALVDTLKFVTQAEGAKQTEATMTFKYNRQSMTLSSEVQIPDFDVDLGTILRVNDESTEGKTSYRLTLDIQNKKITEVALMGHLSCDTKEERKIKGVISIPRLQAEARSEILAHWSPAKLLLQMDSSATAYGSTVSKRVAWHYDEEKIEFEWNTGTNVDTKKMTSNFPVDLSDYPKSLHMYANRLLDHRVPQTDMTFRHVGSKLIVAMSSWLQKASGSLPYTQTLQDHLNSLKEFNLQNMGLPDFHIPENLFLKSDGRVKYTLNKNSLKIEIPLPFGGKSSRDLKMLETVRTPALHFKSVGFHLPSREFQVPTFTIPKLYQLQVPLLGVLDLSTNVYSNLYNWSASYSGGNTSTDHFSLRARYHMKADSVVDLLSYNVQGSGETTYDHKNTFTLSCDGSLRHKFLDSNIKFSHVEKLGNNPVSKGLLIFDASSSWGPQMSASVHLDSKKKQHLFVKEVKIDGQFRVSSFYAKGTYGLSCQRDPNTGRLNGESNLRFNSSYLQGTNQITGRYEDGTLSLTSTSDLQSGIIKNTASLKYENYELTLKSDTNGKYKNFATSNKMDMTFSKQNALLRSEYQADYESLRFFSLLSGSLNSHGLELNADILGTDKINSGAHKATLRIGQDGISTSATTNLKCSLLVLENELNAELGLSGASMKLTTNGRFREHNAKFSLDGKAALTELSLGSAYQAMILGVDSKNIFNFKVSQEGLKLSNDMMGSYAEMKFDHTNSLNIAGLSLDFSSKLDNIYSSDKFYKQTVNLQLQPYSLVTTLNSDLKYNALDLTNNGKLRLEPLKLHVAGNLKGAYQNNEIKHIYAISSAALSASYKADTVAKVQGVEFSHRLNTDIAGLASAIDMSTNYNSDSLHFSNVFRSVMAPFTMTIDAHTNGNGKLALWGEHTGQLYSKFLLKAEPLAFTFSHDYKGSTSHHLVSRKSISAALEHKVSALLTPAEQTGTWKLKTQFNNNEYSQDLDAYNTKDKIGVELTGRTLADLTLLDSPIKVPLLLSEPINIIDALEMRDAVEKPQEFTIVAFVKYDKNQDVHSINLPFFETLQEYFERNRQTIIVVLENVQRNLKHINIDQFVRKYRAALGKLPQQANDYLNSFNWERQVSHAKEKLTALTKKYRITENDIQIALDDAKINFNEKLSQLQTYMIQFDQYIKDSYDLHDLKIAIANIIDEIIEKLKSLDEHYHIRVNLVKTIHDLHLFIENIDFNKSGSSTASWIQNVDTKYQIRIQIQEKLQQLKRHIQNIDIQHLAGKLKQHIEAIDVRVLLDQLGTTISFERINDILEHVKHFVINLIGDFEVAEKINAFRAKVHELIERYEVDQQIQVLMDKLVELAHQYKLKETIQKLSNVLQQVKIKDYFEKLVGFIDDAVKKLNELSFKTFIEDVNKFLDMLIKKLKSFDYHQFVDETNDKIREVTQRLNGEIQALELPQKAEALKLFLEETKATVAVYLESLQDTKITLIINWLQEALSSASLAHMKAKFRETLEDTRDRMYQMDIQQELQRYLSLVGQVYSTLVTYISDWWTLAAKNLTDFAEQYSIQDWAKRMKALVEQGFTVPEIKTILGTMPAFEVSLQALQKATFQTPDFIVPLTDLRIPSVQINFKDLKNIKIPSRFSTPEFTILNTFHIPSFTIDFVEMKVKIIRTIDQMLNSELQWPVPDIYLRDLKVEDIPLARITLPDFRLPEIAIPEFIIPTLNLNDFQVPDLHIPEFQLPHISHTIEVPTFGKLYSILKIQSPLFTLDANADIGNGTTSANEAGIAASITAKGESKLEVLNFDFQANAQLSNPKINPLALKESVKFSSKYLRTEHGSEMLFFGNAIEGKSNTVASLHTEKNTLELSNGVIVKINNQLTLDSNTKYFHKLNIPKLDFSSQADLRNEIKTLLKAGHIAWTSSGKGSWKWACPRFSDEGTHESQISFTIEGPLTSFGLSNKINSKHLRVNQNLVYESGSLNFSKLEIQSQVDSQHVGHSVLTAKGMALFGEGKAEFTGRHDAHLNGKVIGTLKNSLFFSAQPFEITASTNNEGNLKVRFPLRLTGKIDFLNNYALFLSPSAQQASWQVSARFNQYKYNQNFSAGNNENIMEAHVGINGEANLDFLNIPLTIPEMRLPYTIITTPPLKDFSLWEKTGLKEFLKTTKQSFDLSVKAQYKKNKHRHSITNPLAVLCEFISQSIKSFDRHFEKNRNNALDFVTKSYNETKIKFDKYKAEKSHDELPRTFQIPGYTVPVVNVEVSPFTIEMSAFGYVFPKAVSMPSFSILGSDVRVPSYTLILPSLELPVLHVPRNLKLSLPDFKELCTISHIFIPAMGNITYDFSFKSSVITLNTNAELFNQSDIVAHLLSSSSSVIDALQYKLEGTTRLTRKRGLKLATALSLSNKFVEGSHNSTVSLTTKNMEVSVATTTKAQIPILRMNFKQELNGNTKSKPTVSSSMEFKYDFNSSMLYSTAKGAVDHKLSLESLTSYFSIESSTKGDVKGSVLSREYSGTIASEANTYLNSKSTRSSVKLQGTSKIDDIWNLEVKENFAGEATLQRIYSLWEHSTKNHLQLEGLFFTNGEHTSKATLELSPWQMSALVQVHASQPSSFHDFPDLGQEVALNANTKNQKIRWKNEVRIHSGSFQSQVELSNDQEKAHLDIAGSLEGHLRFLKNIILPVYDKSLWDFLKLDVTTSIGRRQHLRVSTAFVYTKNPNGYSFSIPVKVLADKFIIPGLKLNDLNSVLVMPTFHVPFTDLQVPSCKLDFREIQIYKKLRTSSFALNLPTLPEVKFPEVDVLTKYSQPEDSLIPFFEITVPESQLTVSQFTLPKSVSDGIAALDLNAVANKIADFELPTIIVPEQTIEIPSIKFSVPAGIVIPSFQALTARFEVDSPVYNATWSASLKNKADYVETVLDSTCSSTVQFLEYELNVLGTHKIEDGTLASKTKGTFAHRDFSAEYEEDGKYEGLQEWEGKAHLNIKSPAFTDLHLRYQKDKKGISTSAASPAVGTVGMDMDEDDDFSKWNFYYSPQSSPDKKLTIFKTELRVRESDEETQIKVNWEEEAASGLLTSLKDNVPKATGVLYDYVNKYHWEHTGLTLREVSSKLRRNLQNNAEWVYQGAIRQIDDIDVRFQKAASGTTGTYQEWKDKAQNLYQELLTQEGQASFQGLKDNVFDGLVRVTQEFHMKVKHLIDSLIDFLNFPRFQFPGKPGIYTREELCTMFIREVGTVLSQVYSKVHNGSEILFSYFQDLVITLPFELRKHKLIDVISMYRELLKDLSKEAQEVFKAIQSLKTTEVLRNLQDLLQFIFQLIEDNIKQLKEMKFTYLINYIQDEINTIFSDYIPYVFKLLKENLCLNLHKFNEFIQNELQEASQELQQIHQYIMALREEYFDPSIVGWTVKYYELEEKIVSLIKNLLVALKDFHSEYIVSASNFTSQLSSQVEQFLHRNIQEYLSILTDPDGKGKEKIAELSATAQEIIKSQAIATKKIISDYHQQFRYKLQDFSDQLSDYYEKFIAESKRLIDLSIQNYHTFLIYITELLKKLQSTTVMNPYMKLAPGELTIIL</sequence>
<comment type="function">
    <text>Apolipoprotein B is a major protein constituent of chylomicrons (apo B-48), LDL (apo B-100) and VLDL (apo B-100). Apo B-100 functions as a recognition signal for the cellular binding and internalization of LDL particles by the apoB/E receptor.</text>
</comment>
<comment type="subunit">
    <text evidence="1 21 26 27 28">Interacts with PCSK9 (PubMed:22580899). Interacts with MTTP (PubMed:26224785, PubMed:27206948). Interacts with AUP1 (PubMed:28183703). Interacts with CIDEB (By similarity).</text>
</comment>
<comment type="interaction">
    <interactant intactId="EBI-3926040">
        <id>P04114</id>
    </interactant>
    <interactant intactId="EBI-988319">
        <id>P01130</id>
        <label>LDLR</label>
    </interactant>
    <organismsDiffer>false</organismsDiffer>
    <experiments>4</experiments>
</comment>
<comment type="interaction">
    <interactant intactId="EBI-3926040">
        <id>P04114</id>
    </interactant>
    <interactant intactId="EBI-11614052">
        <id>P55157</id>
        <label>MTTP</label>
    </interactant>
    <organismsDiffer>false</organismsDiffer>
    <experiments>4</experiments>
</comment>
<comment type="interaction">
    <interactant intactId="EBI-3926040">
        <id>P04114</id>
    </interactant>
    <interactant intactId="EBI-8826488">
        <id>PRO_0000037946</id>
        <dbReference type="UniProtKB" id="P29991"/>
    </interactant>
    <organismsDiffer>true</organismsDiffer>
    <experiments>3</experiments>
</comment>
<comment type="subcellular location">
    <subcellularLocation>
        <location evidence="21">Cytoplasm</location>
    </subcellularLocation>
    <subcellularLocation>
        <location evidence="21 26">Secreted</location>
    </subcellularLocation>
    <subcellularLocation>
        <location evidence="28">Lipid droplet</location>
    </subcellularLocation>
</comment>
<comment type="induction">
    <text evidence="10">Up-regulated in response to enterovirus 71 (EV71) infection (at protein level).</text>
</comment>
<comment type="PTM">
    <text evidence="4">Palmitoylated; structural requirement for proper assembly of the hydrophobic core of the lipoprotein particle.</text>
</comment>
<comment type="RNA editing">
    <location>
        <position position="2180"/>
    </location>
    <text evidence="22 23 33 36 38">The stop codon (UAA) at position 2180 is created by an APOBEC1-containing mRNA editing complex. Apo B-48, derived from the fully edited RNA, is produced only in the intestine and is found in chylomicrons. Apo B-48 is a shortened form of apo B-100 which lacks the LDL-receptor region. The unedited version (apo B-100) is produced by the liver and is found in the VLDL and LDL.</text>
</comment>
<comment type="polymorphism">
    <text>Genetic variations in APOB define the low density lipoprotein cholesterol level quantitative trait locus 4 (LDLCQ4) [MIM:615558].</text>
</comment>
<comment type="disease" evidence="5 17 27">
    <disease id="DI-01587">
        <name>Hypobetalipoproteinemia, familial, 1</name>
        <acronym>FHBL1</acronym>
        <description>A disorder of lipid metabolism characterized by less than 5th percentile age- and sex-specific levels of low density lipoproteins, and dietary fat malabsorption. Clinical presentation may vary from no symptoms to severe gastrointestinal and neurological dysfunction similar to abetalipoproteinemia.</description>
        <dbReference type="MIM" id="615558"/>
    </disease>
    <text evidence="17">The disease is caused by variants affecting the gene represented in this entry. Most cases of FHBL1 result from nonsense mutations in the APOB gene that lead to a premature stop codon, which generate prematurely truncated apo B protein products (PubMed:21981844).</text>
</comment>
<comment type="disease" evidence="16 24 43 45">
    <disease id="DI-01591">
        <name>Hypercholesterolemia, familial, 2</name>
        <acronym>FHCL2</acronym>
        <description>A form of hypercholesterolemia, a disorder of lipoprotein metabolism characterized by elevated serum low-density lipoprotein (LDL) cholesterol levels, which result in excess deposition of cholesterol in tissues and leads to xanthelasma, xanthomas, accelerated atherosclerosis and increased risk of premature coronary heart disease. FHCL2 inheritance is autosomal dominant.</description>
        <dbReference type="MIM" id="144010"/>
    </disease>
    <text>The disease is caused by variants affecting the gene represented in this entry.</text>
</comment>
<comment type="disease">
    <text>Defects in APOB associated with defects in other genes (polygenic) can contribute to hypocholesterolemia.</text>
</comment>
<comment type="sequence caution" evidence="48">
    <conflict type="frameshift">
        <sequence resource="EMBL-CDS" id="AAA51752"/>
    </conflict>
</comment>
<comment type="online information" name="Wikipedia">
    <link uri="https://en.wikipedia.org/wiki/Apolipoprotein_B"/>
    <text>Apolipoprotein B entry</text>
</comment>
<gene>
    <name type="primary">APOB</name>
</gene>
<protein>
    <recommendedName>
        <fullName>Apolipoprotein B-100</fullName>
        <shortName>Apo B-100</shortName>
    </recommendedName>
    <component>
        <recommendedName>
            <fullName>Apolipoprotein B-48</fullName>
            <shortName>Apo B-48</shortName>
        </recommendedName>
    </component>
</protein>